<comment type="function">
    <text evidence="1 9 11 25">Required for genome-wide de novo methylation and is essential for the establishment of DNA methylation patterns during development (PubMed:12138111, PubMed:16357870, PubMed:30478443). DNA methylation is coordinated with methylation of histones (PubMed:12138111, PubMed:16357870, PubMed:30478443). It modifies DNA in a non-processive manner and also methylates non-CpG sites (PubMed:12138111, PubMed:16357870, PubMed:30478443). May preferentially methylate DNA linker between 2 nucleosomal cores and is inhibited by histone H1 (By similarity). Plays a role in paternal and maternal imprinting (By similarity). Required for methylation of most imprinted loci in germ cells (By similarity). Acts as a transcriptional corepressor for ZBTB18 (By similarity). Recruited to trimethylated 'Lys-36' of histone H3 (H3K36me3) sites (By similarity). Can actively repress transcription through the recruitment of HDAC activity (By similarity). Also has weak auto-methylation activity on Cys-710 in absence of DNA (By similarity).</text>
</comment>
<comment type="catalytic activity">
    <reaction evidence="6 9">
        <text>a 2'-deoxycytidine in DNA + S-adenosyl-L-methionine = a 5-methyl-2'-deoxycytidine in DNA + S-adenosyl-L-homocysteine + H(+)</text>
        <dbReference type="Rhea" id="RHEA:13681"/>
        <dbReference type="Rhea" id="RHEA-COMP:11369"/>
        <dbReference type="Rhea" id="RHEA-COMP:11370"/>
        <dbReference type="ChEBI" id="CHEBI:15378"/>
        <dbReference type="ChEBI" id="CHEBI:57856"/>
        <dbReference type="ChEBI" id="CHEBI:59789"/>
        <dbReference type="ChEBI" id="CHEBI:85452"/>
        <dbReference type="ChEBI" id="CHEBI:85454"/>
        <dbReference type="EC" id="2.1.1.37"/>
    </reaction>
    <physiologicalReaction direction="left-to-right" evidence="9">
        <dbReference type="Rhea" id="RHEA:13682"/>
    </physiologicalReaction>
</comment>
<comment type="catalytic activity">
    <reaction evidence="1">
        <text>L-cysteinyl-[protein] + S-adenosyl-L-methionine = S-methyl-L-cysteinyl-[protein] + S-adenosyl-L-homocysteine + H(+)</text>
        <dbReference type="Rhea" id="RHEA:66544"/>
        <dbReference type="Rhea" id="RHEA-COMP:10131"/>
        <dbReference type="Rhea" id="RHEA-COMP:10132"/>
        <dbReference type="ChEBI" id="CHEBI:15378"/>
        <dbReference type="ChEBI" id="CHEBI:29950"/>
        <dbReference type="ChEBI" id="CHEBI:57856"/>
        <dbReference type="ChEBI" id="CHEBI:59789"/>
        <dbReference type="ChEBI" id="CHEBI:82612"/>
    </reaction>
    <physiologicalReaction direction="left-to-right" evidence="1">
        <dbReference type="Rhea" id="RHEA:66545"/>
    </physiologicalReaction>
</comment>
<comment type="activity regulation">
    <text evidence="1">Activated by binding to the regulatory factor DNMT3L. Auto-methylation at Cys-710 in absence of DNA inactivates the DNA methyltransferase activity.</text>
</comment>
<comment type="subunit">
    <text evidence="1 10 11 12 13 14 15 18 26">Heterotetramer composed of 1 DNMT3A homodimer and 2 DNMT3L subunits (DNMT3L-DNMT3A-DNMT3A-DNMT3L) (PubMed:17713477, PubMed:19834512). Interacts with UBC9, PIAS1 and PIAS2 (By similarity). Binds the ZBTB18 transcriptional repressor (By similarity). Interacts with SETDB1 (PubMed:16682412). Associates with HDAC1 through its ADD domain (By similarity). Interacts with UHRF1 (By similarity). Interacts with DNMT1 and DNMT3B (PubMed:12145218). Interacts with the PRC2/EED-EZH2 complex (PubMed:16357870). Interacts with MPHOSPH8 (PubMed:20871592, PubMed:22086334). Interacts with histone H3 that is not methylated at 'Lys-4' (H3K4) (By similarity). Interacts with SPOCD1 (By similarity). Interacts with ZNF263; recruited to the SIX3 promoter along with other proteins involved in chromatin modification and transcriptional corepression where it contributes to transcriptional repression (PubMed:32051553).</text>
</comment>
<comment type="interaction">
    <interactant intactId="EBI-923653">
        <id>Q9Y6K1</id>
    </interactant>
    <interactant intactId="EBI-3907794">
        <id>Q03060</id>
        <label>CREM</label>
    </interactant>
    <organismsDiffer>false</organismsDiffer>
    <experiments>2</experiments>
</comment>
<comment type="interaction">
    <interactant intactId="EBI-923653">
        <id>Q9Y6K1</id>
    </interactant>
    <interactant intactId="EBI-923653">
        <id>Q9Y6K1</id>
        <label>DNMT3A</label>
    </interactant>
    <organismsDiffer>false</organismsDiffer>
    <experiments>4</experiments>
</comment>
<comment type="interaction">
    <interactant intactId="EBI-923653">
        <id>Q9Y6K1</id>
    </interactant>
    <interactant intactId="EBI-80125">
        <id>Q9UBC3</id>
        <label>DNMT3B</label>
    </interactant>
    <organismsDiffer>false</organismsDiffer>
    <experiments>4</experiments>
</comment>
<comment type="interaction">
    <interactant intactId="EBI-923653">
        <id>Q9Y6K1</id>
    </interactant>
    <interactant intactId="EBI-15650345">
        <id>Q9UJW3-1</id>
        <label>DNMT3L</label>
    </interactant>
    <organismsDiffer>false</organismsDiffer>
    <experiments>5</experiments>
</comment>
<comment type="interaction">
    <interactant intactId="EBI-923653">
        <id>Q9Y6K1</id>
    </interactant>
    <interactant intactId="EBI-923794">
        <id>O75530</id>
        <label>EED</label>
    </interactant>
    <organismsDiffer>false</organismsDiffer>
    <experiments>2</experiments>
</comment>
<comment type="interaction">
    <interactant intactId="EBI-923653">
        <id>Q9Y6K1</id>
    </interactant>
    <interactant intactId="EBI-530054">
        <id>Q15910</id>
        <label>EZH2</label>
    </interactant>
    <organismsDiffer>false</organismsDiffer>
    <experiments>6</experiments>
</comment>
<comment type="interaction">
    <interactant intactId="EBI-923653">
        <id>Q9Y6K1</id>
    </interactant>
    <interactant intactId="EBI-120658">
        <id>P84243</id>
        <label>H3-3B</label>
    </interactant>
    <organismsDiffer>false</organismsDiffer>
    <experiments>7</experiments>
</comment>
<comment type="interaction">
    <interactant intactId="EBI-923653">
        <id>Q9Y6K1</id>
    </interactant>
    <interactant intactId="EBI-724076">
        <id>Q99750</id>
        <label>MDFI</label>
    </interactant>
    <organismsDiffer>false</organismsDiffer>
    <experiments>3</experiments>
</comment>
<comment type="interaction">
    <interactant intactId="EBI-923653">
        <id>Q9Y6K1</id>
    </interactant>
    <interactant intactId="EBI-16439278">
        <id>Q6FHY5</id>
        <label>MEOX2</label>
    </interactant>
    <organismsDiffer>false</organismsDiffer>
    <experiments>4</experiments>
</comment>
<comment type="interaction">
    <interactant intactId="EBI-923653">
        <id>Q9Y6K1</id>
    </interactant>
    <interactant intactId="EBI-740446">
        <id>P32242</id>
        <label>OTX1</label>
    </interactant>
    <organismsDiffer>false</organismsDiffer>
    <experiments>3</experiments>
</comment>
<comment type="interaction">
    <interactant intactId="EBI-923653">
        <id>Q9Y6K1</id>
    </interactant>
    <interactant intactId="EBI-351098">
        <id>O14744</id>
        <label>PRMT5</label>
    </interactant>
    <organismsDiffer>false</organismsDiffer>
    <experiments>4</experiments>
</comment>
<comment type="interaction">
    <interactant intactId="EBI-923653">
        <id>Q9Y6K1</id>
    </interactant>
    <interactant intactId="EBI-79691">
        <id>Q15047</id>
        <label>SETDB1</label>
    </interactant>
    <organismsDiffer>false</organismsDiffer>
    <experiments>7</experiments>
</comment>
<comment type="interaction">
    <interactant intactId="EBI-923653">
        <id>Q9Y6K1</id>
    </interactant>
    <interactant intactId="EBI-751145">
        <id>P23497</id>
        <label>SP100</label>
    </interactant>
    <organismsDiffer>false</organismsDiffer>
    <experiments>3</experiments>
</comment>
<comment type="interaction">
    <interactant intactId="EBI-923653">
        <id>Q9Y6K1</id>
    </interactant>
    <interactant intactId="EBI-749995">
        <id>P56279</id>
        <label>TCL1A</label>
    </interactant>
    <organismsDiffer>false</organismsDiffer>
    <experiments>13</experiments>
</comment>
<comment type="interaction">
    <interactant intactId="EBI-923653">
        <id>Q9Y6K1</id>
    </interactant>
    <interactant intactId="EBI-1548946">
        <id>Q96T88</id>
        <label>UHRF1</label>
    </interactant>
    <organismsDiffer>false</organismsDiffer>
    <experiments>7</experiments>
</comment>
<comment type="interaction">
    <interactant intactId="EBI-923653">
        <id>Q9Y6K1</id>
    </interactant>
    <interactant intactId="EBI-720609">
        <id>O76024</id>
        <label>WFS1</label>
    </interactant>
    <organismsDiffer>false</organismsDiffer>
    <experiments>3</experiments>
</comment>
<comment type="interaction">
    <interactant intactId="EBI-923653">
        <id>Q9Y6K1</id>
    </interactant>
    <interactant intactId="EBI-10279993">
        <id>Q8N8E2</id>
        <label>ZNF513</label>
    </interactant>
    <organismsDiffer>false</organismsDiffer>
    <experiments>3</experiments>
</comment>
<comment type="interaction">
    <interactant intactId="EBI-923653">
        <id>Q9Y6K1</id>
    </interactant>
    <interactant intactId="EBI-15602554">
        <id>Q9QR71</id>
        <label>LANA1</label>
    </interactant>
    <organismsDiffer>true</organismsDiffer>
    <experiments>3</experiments>
</comment>
<comment type="subcellular location">
    <subcellularLocation>
        <location evidence="9 10">Nucleus</location>
    </subcellularLocation>
    <subcellularLocation>
        <location evidence="9">Chromosome</location>
    </subcellularLocation>
    <subcellularLocation>
        <location evidence="10">Cytoplasm</location>
    </subcellularLocation>
    <text evidence="1">Accumulates in the major satellite repeats at pericentric heterochromatin.</text>
</comment>
<comment type="alternative products">
    <event type="alternative promoter"/>
    <event type="alternative splicing"/>
    <isoform>
        <id>Q9Y6K1-1</id>
        <name>1</name>
        <sequence type="displayed"/>
    </isoform>
    <isoform>
        <id>Q9Y6K1-2</id>
        <name>2</name>
        <sequence type="described" ref="VSP_046254"/>
    </isoform>
    <isoform>
        <id>Q9Y6K1-3</id>
        <name>3</name>
        <sequence type="described" ref="VSP_040998 VSP_040999"/>
    </isoform>
</comment>
<comment type="tissue specificity">
    <text evidence="8">Highly expressed in fetal tissues, skeletal muscle, heart, peripheral blood mononuclear cells, kidney, and at lower levels in placenta, brain, liver, colon, spleen, small intestine and lung.</text>
</comment>
<comment type="domain">
    <text evidence="1">The PWWP domain is essential for targeting to pericentric heterochromatin. It specifically recognizes and binds trimethylated 'Lys-36' of histone H3 (H3K36me3) (By similarity).</text>
</comment>
<comment type="PTM">
    <text evidence="1">Sumoylated; sumoylation disrupts the ability to interact with histone deacetylases (HDAC1 and HDAC2) and repress transcription.</text>
</comment>
<comment type="PTM">
    <text evidence="1">Auto-methylated at Cys-710: auto-methylation takes place in absence of DNA substrate and inactivates the DNA methyltransferase activity. Inactivation by auto-methylation may be used to inactivate unused DNA methyltransferases in the cell.</text>
</comment>
<comment type="disease" evidence="19 20 21 22 23 24">
    <disease id="DI-04151">
        <name>Tatton-Brown-Rahman syndrome</name>
        <acronym>TBRS</acronym>
        <description>An overgrowth syndrome characterized by a distinctive facial appearance, tall stature and intellectual disability. Facial gestalt is characterized by a round face, heavy horizontal eyebrows and narrow palpebral fissures. Less common features include atrial septal defects, seizures, umbilical hernia, and scoliosis.</description>
        <dbReference type="MIM" id="615879"/>
    </disease>
    <text>The disease is caused by variants affecting the gene represented in this entry.</text>
</comment>
<comment type="disease" evidence="16">
    <disease id="DI-01171">
        <name>Leukemia, acute myelogenous</name>
        <acronym>AML</acronym>
        <description>A subtype of acute leukemia, a cancer of the white blood cells. AML is a malignant disease of bone marrow characterized by maturational arrest of hematopoietic precursors at an early stage of development. Clonal expansion of myeloid blasts occurs in bone marrow, blood, and other tissue. Myelogenous leukemias develop from changes in cells that normally produce neutrophils, basophils, eosinophils and monocytes.</description>
        <dbReference type="MIM" id="601626"/>
    </disease>
    <text>The disease is caused by variants affecting the gene represented in this entry.</text>
</comment>
<comment type="disease" evidence="25">
    <disease id="DI-05727">
        <name>Heyn-Sproul-Jackson syndrome</name>
        <acronym>HESJAS</acronym>
        <description>An autosomal dominant form of microcephalic dwarfism. Affected individuals have intrauterine growth retardation, postnatal growth restrictions, proportionate short stature, microcephaly, severe developmental delay and impaired intellectual development. More variable features include sparse hair, short broad metacarpals and phalanges, and mild recurrent infections.</description>
        <dbReference type="MIM" id="618724"/>
    </disease>
    <text>The disease is caused by variants affecting the gene represented in this entry.</text>
</comment>
<comment type="miscellaneous">
    <molecule>Isoform 2</molecule>
    <text evidence="29">It is uncertain whether Met-1 or Met-35 is the initiator.</text>
</comment>
<comment type="miscellaneous">
    <molecule>Isoform 3</molecule>
    <text evidence="29">Produced by alternative splicing.</text>
</comment>
<comment type="similarity">
    <text evidence="5">Belongs to the class I-like SAM-binding methyltransferase superfamily. C5-methyltransferase family.</text>
</comment>
<comment type="caution">
    <text evidence="29">It is uncertain whether Met-1 or Met-4 is the initiator.</text>
</comment>
<comment type="sequence caution" evidence="29">
    <conflict type="erroneous initiation">
        <sequence resource="EMBL-CDS" id="AAL57039"/>
    </conflict>
    <text>Truncated N-terminus.</text>
</comment>
<comment type="sequence caution" evidence="29">
    <conflict type="erroneous initiation">
        <sequence resource="EMBL-CDS" id="AAN40037"/>
    </conflict>
    <text>Truncated N-terminus.</text>
</comment>
<reference key="1">
    <citation type="journal article" date="1999" name="Gene">
        <title>Cloning, expression and chromosome locations of the human DNMT3 gene family.</title>
        <authorList>
            <person name="Xie S."/>
            <person name="Wang Z."/>
            <person name="Okano M."/>
            <person name="Nogami M."/>
            <person name="Li Y."/>
            <person name="He W.-W."/>
            <person name="Okumura K."/>
            <person name="Li E."/>
        </authorList>
    </citation>
    <scope>NUCLEOTIDE SEQUENCE [MRNA] (ISOFORM 1)</scope>
    <source>
        <tissue>Fetal testis</tissue>
    </source>
</reference>
<reference key="2">
    <citation type="journal article" date="2002" name="J. Biol. Chem.">
        <title>A novel Dnmt3a isoform produced from an alternative promoter localizes to euchromatin and its expression correlates with active de novo methylation.</title>
        <authorList>
            <person name="Chen T."/>
            <person name="Ueda Y."/>
            <person name="Xie S."/>
            <person name="Li E."/>
        </authorList>
    </citation>
    <scope>NUCLEOTIDE SEQUENCE [MRNA] (ISOFORM 2)</scope>
    <scope>FUNCTION</scope>
    <scope>CATALYTIC ACTIVITY</scope>
</reference>
<reference key="3">
    <citation type="journal article" date="2002" name="EMBO J.">
        <title>Co-operation and communication between the human maintenance and de novo DNA (cytosine-5) methyltransferases.</title>
        <authorList>
            <person name="Kim G.-D."/>
            <person name="Ni J."/>
            <person name="Kelesoglu N."/>
            <person name="Roberts R.J."/>
            <person name="Pradhan S."/>
        </authorList>
    </citation>
    <scope>NUCLEOTIDE SEQUENCE [MRNA] (ISOFORM 1)</scope>
    <scope>INTERACTION WITH DNMT1 AND DNMT3B</scope>
    <scope>SUBCELLULAR LOCATION</scope>
</reference>
<reference key="4">
    <citation type="journal article" date="2005" name="Nature">
        <title>Generation and annotation of the DNA sequences of human chromosomes 2 and 4.</title>
        <authorList>
            <person name="Hillier L.W."/>
            <person name="Graves T.A."/>
            <person name="Fulton R.S."/>
            <person name="Fulton L.A."/>
            <person name="Pepin K.H."/>
            <person name="Minx P."/>
            <person name="Wagner-McPherson C."/>
            <person name="Layman D."/>
            <person name="Wylie K."/>
            <person name="Sekhon M."/>
            <person name="Becker M.C."/>
            <person name="Fewell G.A."/>
            <person name="Delehaunty K.D."/>
            <person name="Miner T.L."/>
            <person name="Nash W.E."/>
            <person name="Kremitzki C."/>
            <person name="Oddy L."/>
            <person name="Du H."/>
            <person name="Sun H."/>
            <person name="Bradshaw-Cordum H."/>
            <person name="Ali J."/>
            <person name="Carter J."/>
            <person name="Cordes M."/>
            <person name="Harris A."/>
            <person name="Isak A."/>
            <person name="van Brunt A."/>
            <person name="Nguyen C."/>
            <person name="Du F."/>
            <person name="Courtney L."/>
            <person name="Kalicki J."/>
            <person name="Ozersky P."/>
            <person name="Abbott S."/>
            <person name="Armstrong J."/>
            <person name="Belter E.A."/>
            <person name="Caruso L."/>
            <person name="Cedroni M."/>
            <person name="Cotton M."/>
            <person name="Davidson T."/>
            <person name="Desai A."/>
            <person name="Elliott G."/>
            <person name="Erb T."/>
            <person name="Fronick C."/>
            <person name="Gaige T."/>
            <person name="Haakenson W."/>
            <person name="Haglund K."/>
            <person name="Holmes A."/>
            <person name="Harkins R."/>
            <person name="Kim K."/>
            <person name="Kruchowski S.S."/>
            <person name="Strong C.M."/>
            <person name="Grewal N."/>
            <person name="Goyea E."/>
            <person name="Hou S."/>
            <person name="Levy A."/>
            <person name="Martinka S."/>
            <person name="Mead K."/>
            <person name="McLellan M.D."/>
            <person name="Meyer R."/>
            <person name="Randall-Maher J."/>
            <person name="Tomlinson C."/>
            <person name="Dauphin-Kohlberg S."/>
            <person name="Kozlowicz-Reilly A."/>
            <person name="Shah N."/>
            <person name="Swearengen-Shahid S."/>
            <person name="Snider J."/>
            <person name="Strong J.T."/>
            <person name="Thompson J."/>
            <person name="Yoakum M."/>
            <person name="Leonard S."/>
            <person name="Pearman C."/>
            <person name="Trani L."/>
            <person name="Radionenko M."/>
            <person name="Waligorski J.E."/>
            <person name="Wang C."/>
            <person name="Rock S.M."/>
            <person name="Tin-Wollam A.-M."/>
            <person name="Maupin R."/>
            <person name="Latreille P."/>
            <person name="Wendl M.C."/>
            <person name="Yang S.-P."/>
            <person name="Pohl C."/>
            <person name="Wallis J.W."/>
            <person name="Spieth J."/>
            <person name="Bieri T.A."/>
            <person name="Berkowicz N."/>
            <person name="Nelson J.O."/>
            <person name="Osborne J."/>
            <person name="Ding L."/>
            <person name="Meyer R."/>
            <person name="Sabo A."/>
            <person name="Shotland Y."/>
            <person name="Sinha P."/>
            <person name="Wohldmann P.E."/>
            <person name="Cook L.L."/>
            <person name="Hickenbotham M.T."/>
            <person name="Eldred J."/>
            <person name="Williams D."/>
            <person name="Jones T.A."/>
            <person name="She X."/>
            <person name="Ciccarelli F.D."/>
            <person name="Izaurralde E."/>
            <person name="Taylor J."/>
            <person name="Schmutz J."/>
            <person name="Myers R.M."/>
            <person name="Cox D.R."/>
            <person name="Huang X."/>
            <person name="McPherson J.D."/>
            <person name="Mardis E.R."/>
            <person name="Clifton S.W."/>
            <person name="Warren W.C."/>
            <person name="Chinwalla A.T."/>
            <person name="Eddy S.R."/>
            <person name="Marra M.A."/>
            <person name="Ovcharenko I."/>
            <person name="Furey T.S."/>
            <person name="Miller W."/>
            <person name="Eichler E.E."/>
            <person name="Bork P."/>
            <person name="Suyama M."/>
            <person name="Torrents D."/>
            <person name="Waterston R.H."/>
            <person name="Wilson R.K."/>
        </authorList>
    </citation>
    <scope>NUCLEOTIDE SEQUENCE [LARGE SCALE GENOMIC DNA]</scope>
</reference>
<reference key="5">
    <citation type="submission" date="2005-09" db="EMBL/GenBank/DDBJ databases">
        <authorList>
            <person name="Mural R.J."/>
            <person name="Istrail S."/>
            <person name="Sutton G.G."/>
            <person name="Florea L."/>
            <person name="Halpern A.L."/>
            <person name="Mobarry C.M."/>
            <person name="Lippert R."/>
            <person name="Walenz B."/>
            <person name="Shatkay H."/>
            <person name="Dew I."/>
            <person name="Miller J.R."/>
            <person name="Flanigan M.J."/>
            <person name="Edwards N.J."/>
            <person name="Bolanos R."/>
            <person name="Fasulo D."/>
            <person name="Halldorsson B.V."/>
            <person name="Hannenhalli S."/>
            <person name="Turner R."/>
            <person name="Yooseph S."/>
            <person name="Lu F."/>
            <person name="Nusskern D.R."/>
            <person name="Shue B.C."/>
            <person name="Zheng X.H."/>
            <person name="Zhong F."/>
            <person name="Delcher A.L."/>
            <person name="Huson D.H."/>
            <person name="Kravitz S.A."/>
            <person name="Mouchard L."/>
            <person name="Reinert K."/>
            <person name="Remington K.A."/>
            <person name="Clark A.G."/>
            <person name="Waterman M.S."/>
            <person name="Eichler E.E."/>
            <person name="Adams M.D."/>
            <person name="Hunkapiller M.W."/>
            <person name="Myers E.W."/>
            <person name="Venter J.C."/>
        </authorList>
    </citation>
    <scope>NUCLEOTIDE SEQUENCE [LARGE SCALE GENOMIC DNA]</scope>
</reference>
<reference key="6">
    <citation type="journal article" date="2004" name="Genome Res.">
        <title>The status, quality, and expansion of the NIH full-length cDNA project: the Mammalian Gene Collection (MGC).</title>
        <authorList>
            <consortium name="The MGC Project Team"/>
        </authorList>
    </citation>
    <scope>NUCLEOTIDE SEQUENCE [LARGE SCALE MRNA] (ISOFORMS 1 AND 3)</scope>
    <source>
        <tissue>Lung</tissue>
        <tissue>PNS</tissue>
        <tissue>Skin</tissue>
    </source>
</reference>
<reference key="7">
    <citation type="journal article" date="1999" name="Nucleic Acids Res.">
        <title>The human DNA methyltransferases (DNMTs) 1, 3a and 3b: coordinate mRNA expression in normal tissues and overexpression in tumors.</title>
        <authorList>
            <person name="Robertson K.D."/>
            <person name="Uzvolgyi E."/>
            <person name="Liang G."/>
            <person name="Talmadge C."/>
            <person name="Sumegi J."/>
            <person name="Gonzales F.A."/>
            <person name="Jones P.A."/>
        </authorList>
    </citation>
    <scope>TISSUE SPECIFICITY</scope>
</reference>
<reference key="8">
    <citation type="journal article" date="2006" name="Cell">
        <title>Global, in vivo, and site-specific phosphorylation dynamics in signaling networks.</title>
        <authorList>
            <person name="Olsen J.V."/>
            <person name="Blagoev B."/>
            <person name="Gnad F."/>
            <person name="Macek B."/>
            <person name="Kumar C."/>
            <person name="Mortensen P."/>
            <person name="Mann M."/>
        </authorList>
    </citation>
    <scope>PHOSPHORYLATION [LARGE SCALE ANALYSIS] AT SER-105</scope>
    <scope>IDENTIFICATION BY MASS SPECTROMETRY [LARGE SCALE ANALYSIS]</scope>
    <source>
        <tissue>Cervix carcinoma</tissue>
    </source>
</reference>
<reference key="9">
    <citation type="journal article" date="2006" name="J. Biol. Chem.">
        <title>The histone methyltransferase SETDB1 and the DNA methyltransferase DNMT3A interact directly and localize to promoters silenced in cancer cells.</title>
        <authorList>
            <person name="Li H."/>
            <person name="Rauch T."/>
            <person name="Chen Z.-X."/>
            <person name="Szabo P.E."/>
            <person name="Riggs A.D."/>
            <person name="Pfeifer G.P."/>
        </authorList>
    </citation>
    <scope>INTERACTION WITH SETDB1</scope>
</reference>
<reference key="10">
    <citation type="journal article" date="2006" name="Nature">
        <title>The Polycomb group protein EZH2 directly controls DNA methylation.</title>
        <authorList>
            <person name="Vire E."/>
            <person name="Brenner C."/>
            <person name="Deplus R."/>
            <person name="Blanchon L."/>
            <person name="Fraga M."/>
            <person name="Didelot C."/>
            <person name="Morey L."/>
            <person name="Van Eynde A."/>
            <person name="Bernard D."/>
            <person name="Vanderwinden J.-M."/>
            <person name="Bollen M."/>
            <person name="Esteller M."/>
            <person name="Di Croce L."/>
            <person name="de Launoit Y."/>
            <person name="Fuks F."/>
        </authorList>
    </citation>
    <scope>FUNCTION</scope>
    <scope>INTERACTION WITH THE PRC2/EED-EZH2 COMPLEX</scope>
</reference>
<reference key="11">
    <citation type="journal article" date="2006" name="Nature">
        <authorList>
            <person name="Vire E."/>
            <person name="Brenner C."/>
            <person name="Deplus R."/>
            <person name="Blanchon L."/>
            <person name="Fraga M."/>
            <person name="Didelot C."/>
            <person name="Morey L."/>
            <person name="Van Eynde A."/>
            <person name="Bernard D."/>
            <person name="Vanderwinden J.-M."/>
            <person name="Bollen M."/>
            <person name="Esteller M."/>
            <person name="Di Croce L."/>
            <person name="de Launoit Y."/>
            <person name="Fuks F."/>
        </authorList>
    </citation>
    <scope>ERRATUM OF PUBMED:16357870</scope>
</reference>
<reference key="12">
    <citation type="journal article" date="2007" name="Nat. Genet.">
        <title>Polycomb-mediated methylation on Lys27 of histone H3 pre-marks genes for de novo methylation in cancer.</title>
        <authorList>
            <person name="Schlesinger Y."/>
            <person name="Straussman R."/>
            <person name="Keshet I."/>
            <person name="Farkash S."/>
            <person name="Hecht M."/>
            <person name="Zimmerman J."/>
            <person name="Eden E."/>
            <person name="Yakhini Z."/>
            <person name="Ben-Shushan E."/>
            <person name="Reubinoff B.E."/>
            <person name="Bergman Y."/>
            <person name="Simon I."/>
            <person name="Cedar H."/>
        </authorList>
    </citation>
    <scope>DE NOVO DNA METHYLATION OF TARGET GENES</scope>
</reference>
<reference key="13">
    <citation type="journal article" date="2008" name="Proc. Natl. Acad. Sci. U.S.A.">
        <title>A quantitative atlas of mitotic phosphorylation.</title>
        <authorList>
            <person name="Dephoure N."/>
            <person name="Zhou C."/>
            <person name="Villen J."/>
            <person name="Beausoleil S.A."/>
            <person name="Bakalarski C.E."/>
            <person name="Elledge S.J."/>
            <person name="Gygi S.P."/>
        </authorList>
    </citation>
    <scope>PHOSPHORYLATION [LARGE SCALE ANALYSIS] AT SER-105</scope>
    <scope>IDENTIFICATION BY MASS SPECTROMETRY [LARGE SCALE ANALYSIS]</scope>
    <source>
        <tissue>Cervix carcinoma</tissue>
    </source>
</reference>
<reference key="14">
    <citation type="journal article" date="2010" name="EMBO J.">
        <title>Methyl-H3K9-binding protein MPP8 mediates E-cadherin gene silencing and promotes tumour cell motility and invasion.</title>
        <authorList>
            <person name="Kokura K."/>
            <person name="Sun L."/>
            <person name="Bedford M.T."/>
            <person name="Fang J."/>
        </authorList>
    </citation>
    <scope>INTERACTION WITH MPHOSPH8</scope>
</reference>
<reference key="15">
    <citation type="journal article" date="2010" name="N. Engl. J. Med.">
        <title>DNMT3A mutations in acute myeloid leukemia.</title>
        <authorList>
            <person name="Ley T.J."/>
            <person name="Ding L."/>
            <person name="Walter M.J."/>
            <person name="McLellan M.D."/>
            <person name="Lamprecht T."/>
            <person name="Larson D.E."/>
            <person name="Kandoth C."/>
            <person name="Payton J.E."/>
            <person name="Baty J."/>
            <person name="Welch J."/>
            <person name="Harris C.C."/>
            <person name="Lichti C.F."/>
            <person name="Townsend R.R."/>
            <person name="Fulton R.S."/>
            <person name="Dooling D.J."/>
            <person name="Koboldt D.C."/>
            <person name="Schmidt H."/>
            <person name="Zhang Q."/>
            <person name="Osborne J.R."/>
            <person name="Lin L."/>
            <person name="O'Laughlin M."/>
            <person name="McMichael J.F."/>
            <person name="Delehaunty K.D."/>
            <person name="McGrath S.D."/>
            <person name="Fulton L.A."/>
            <person name="Magrini V.J."/>
            <person name="Vickery T.L."/>
            <person name="Hundal J."/>
            <person name="Cook L.L."/>
            <person name="Conyers J.J."/>
            <person name="Swift G.W."/>
            <person name="Reed J.P."/>
            <person name="Alldredge P.A."/>
            <person name="Wylie T."/>
            <person name="Walker J."/>
            <person name="Kalicki J."/>
            <person name="Watson M.A."/>
            <person name="Heath S."/>
            <person name="Shannon W.D."/>
            <person name="Varghese N."/>
            <person name="Nagarajan R."/>
            <person name="Westervelt P."/>
            <person name="Tomasson M.H."/>
            <person name="Link D.C."/>
            <person name="Graubert T.A."/>
            <person name="DiPersio J.F."/>
            <person name="Mardis E.R."/>
            <person name="Wilson R.K."/>
        </authorList>
    </citation>
    <scope>INVOLVEMENT IN AML</scope>
    <scope>VARIANTS AML HIS-882 AND CYS-882</scope>
</reference>
<reference key="16">
    <citation type="journal article" date="2010" name="Sci. Signal.">
        <title>Quantitative phosphoproteomics reveals widespread full phosphorylation site occupancy during mitosis.</title>
        <authorList>
            <person name="Olsen J.V."/>
            <person name="Vermeulen M."/>
            <person name="Santamaria A."/>
            <person name="Kumar C."/>
            <person name="Miller M.L."/>
            <person name="Jensen L.J."/>
            <person name="Gnad F."/>
            <person name="Cox J."/>
            <person name="Jensen T.S."/>
            <person name="Nigg E.A."/>
            <person name="Brunak S."/>
            <person name="Mann M."/>
        </authorList>
    </citation>
    <scope>PHOSPHORYLATION [LARGE SCALE ANALYSIS] AT SER-243</scope>
    <scope>IDENTIFICATION BY MASS SPECTROMETRY [LARGE SCALE ANALYSIS]</scope>
    <source>
        <tissue>Cervix carcinoma</tissue>
    </source>
</reference>
<reference key="17">
    <citation type="journal article" date="2011" name="Sci. Signal.">
        <title>System-wide temporal characterization of the proteome and phosphoproteome of human embryonic stem cell differentiation.</title>
        <authorList>
            <person name="Rigbolt K.T."/>
            <person name="Prokhorova T.A."/>
            <person name="Akimov V."/>
            <person name="Henningsen J."/>
            <person name="Johansen P.T."/>
            <person name="Kratchmarova I."/>
            <person name="Kassem M."/>
            <person name="Mann M."/>
            <person name="Olsen J.V."/>
            <person name="Blagoev B."/>
        </authorList>
    </citation>
    <scope>PHOSPHORYLATION [LARGE SCALE ANALYSIS] AT SER-105; SER-243; SER-255; THR-261 AND SER-267</scope>
    <scope>IDENTIFICATION BY MASS SPECTROMETRY [LARGE SCALE ANALYSIS]</scope>
</reference>
<reference key="18">
    <citation type="journal article" date="2013" name="J. Proteome Res.">
        <title>Toward a comprehensive characterization of a human cancer cell phosphoproteome.</title>
        <authorList>
            <person name="Zhou H."/>
            <person name="Di Palma S."/>
            <person name="Preisinger C."/>
            <person name="Peng M."/>
            <person name="Polat A.N."/>
            <person name="Heck A.J."/>
            <person name="Mohammed S."/>
        </authorList>
    </citation>
    <scope>PHOSPHORYLATION [LARGE SCALE ANALYSIS] AT SER-105</scope>
    <scope>IDENTIFICATION BY MASS SPECTROMETRY [LARGE SCALE ANALYSIS]</scope>
    <source>
        <tissue>Cervix carcinoma</tissue>
        <tissue>Erythroleukemia</tissue>
    </source>
</reference>
<reference key="19">
    <citation type="journal article" date="2014" name="Nat. Genet.">
        <title>Mutations in the DNA methyltransferase gene DNMT3A cause an overgrowth syndrome with intellectual disability.</title>
        <authorList>
            <consortium name="Childhood Overgrowth Consortium"/>
            <person name="Tatton-Brown K."/>
            <person name="Seal S."/>
            <person name="Ruark E."/>
            <person name="Harmer J."/>
            <person name="Ramsay E."/>
            <person name="Del Vecchio Duarte S."/>
            <person name="Zachariou A."/>
            <person name="Hanks S."/>
            <person name="O'Brien E."/>
            <person name="Aksglaede L."/>
            <person name="Baralle D."/>
            <person name="Dabir T."/>
            <person name="Gener B."/>
            <person name="Goudie D."/>
            <person name="Homfray T."/>
            <person name="Kumar A."/>
            <person name="Pilz D.T."/>
            <person name="Selicorni A."/>
            <person name="Temple I.K."/>
            <person name="Van Maldergem L."/>
            <person name="Yachelevich N."/>
            <person name="van Montfort R."/>
            <person name="Rahman N."/>
        </authorList>
    </citation>
    <scope>INVOLVEMENT IN TBRS</scope>
    <scope>VARIANTS TBRS ASN-310; SER-532; LYS-548; ARG-549; PRO-648; LEU-700; CYS-749; ASP-838; SER-902 AND LEU-904</scope>
</reference>
<reference key="20">
    <citation type="journal article" date="2017" name="Nat. Struct. Mol. Biol.">
        <title>Site-specific mapping of the human SUMO proteome reveals co-modification with phosphorylation.</title>
        <authorList>
            <person name="Hendriks I.A."/>
            <person name="Lyon D."/>
            <person name="Young C."/>
            <person name="Jensen L.J."/>
            <person name="Vertegaal A.C."/>
            <person name="Nielsen M.L."/>
        </authorList>
    </citation>
    <scope>SUMOYLATION [LARGE SCALE ANALYSIS] AT LYS-162</scope>
    <scope>IDENTIFICATION BY MASS SPECTROMETRY [LARGE SCALE ANALYSIS]</scope>
</reference>
<reference key="21">
    <citation type="journal article" date="2019" name="Nat. Genet.">
        <title>Gain-of-function DNMT3A mutations cause microcephalic dwarfism and hypermethylation of Polycomb-regulated regions.</title>
        <authorList>
            <person name="Heyn P."/>
            <person name="Logan C.V."/>
            <person name="Fluteau A."/>
            <person name="Challis R.C."/>
            <person name="Auchynnikava T."/>
            <person name="Martin C.A."/>
            <person name="Marsh J.A."/>
            <person name="Taglini F."/>
            <person name="Kilanowski F."/>
            <person name="Parry D.A."/>
            <person name="Cormier-Daire V."/>
            <person name="Fong C.T."/>
            <person name="Gibson K."/>
            <person name="Hwa V."/>
            <person name="Ibanez L."/>
            <person name="Robertson S.P."/>
            <person name="Sebastiani G."/>
            <person name="Rappsilber J."/>
            <person name="Allshire R.C."/>
            <person name="Reijns M.A.M."/>
            <person name="Dauber A."/>
            <person name="Sproul D."/>
            <person name="Jackson A.P."/>
        </authorList>
    </citation>
    <scope>INVOLVEMENT IN HESJAS</scope>
    <scope>VARIANTS HESJAS ARG-330 AND ASN-333</scope>
    <scope>CHARACTERIZATION OF VARIANTS HESJAS ARG-330 AND ASN-333</scope>
    <scope>FUNCTION</scope>
</reference>
<reference key="22">
    <citation type="journal article" date="2020" name="Oncogene">
        <title>The EGFR-ZNF263 signaling axis silences SIX3 in glioblastoma epigenetically.</title>
        <authorList>
            <person name="Yu Z."/>
            <person name="Feng J."/>
            <person name="Wang W."/>
            <person name="Deng Z."/>
            <person name="Zhang Y."/>
            <person name="Xiao L."/>
            <person name="Wang Z."/>
            <person name="Liu C."/>
            <person name="Liu Q."/>
            <person name="Chen S."/>
            <person name="Wu M."/>
        </authorList>
    </citation>
    <scope>INTERACTION WITH ZNF263</scope>
</reference>
<reference key="23">
    <citation type="journal article" date="2007" name="Nature">
        <title>Structure of Dnmt3a bound to Dnmt3L suggests a model for de novo DNA methylation.</title>
        <authorList>
            <person name="Jia D."/>
            <person name="Jurkowska R.Z."/>
            <person name="Zhang X."/>
            <person name="Jeltsch A."/>
            <person name="Cheng X."/>
        </authorList>
    </citation>
    <scope>X-RAY CRYSTALLOGRAPHY (2.89 ANGSTROMS) OF 627-909 IN COMPLEX WITH S-ADENOSYL-L-HOMOCYSTEINE</scope>
    <scope>SUBUNIT</scope>
    <scope>MUTAGENESIS OF PHE-732</scope>
</reference>
<reference key="24">
    <citation type="journal article" date="2009" name="EMBO Rep.">
        <title>Structural basis for recognition of H3K4 methylation status by the DNA methyltransferase 3A ATRX-DNMT3-DNMT3L domain.</title>
        <authorList>
            <person name="Otani J."/>
            <person name="Nankumo T."/>
            <person name="Arita K."/>
            <person name="Inamoto S."/>
            <person name="Ariyoshi M."/>
            <person name="Shirakawa M."/>
        </authorList>
    </citation>
    <scope>X-RAY CRYSTALLOGRAPHY (2.29 ANGSTROMS) OF 476-614 IN COMPLEXES WITH ZINC AND WITH HISTONE H3 PEPTIDE</scope>
    <scope>SUBUNIT</scope>
</reference>
<reference key="25">
    <citation type="journal article" date="2011" name="Nat. Commun.">
        <title>MPP8 mediates the interactions between DNA methyltransferase Dnmt3a and H3K9 methyltransferase GLP/G9a.</title>
        <authorList>
            <person name="Chang Y."/>
            <person name="Sun L."/>
            <person name="Kokura K."/>
            <person name="Horton J.R."/>
            <person name="Fukuda M."/>
            <person name="Espejo A."/>
            <person name="Izumi V."/>
            <person name="Koomen J.M."/>
            <person name="Bedford M.T."/>
            <person name="Zhang X."/>
            <person name="Shinkai Y."/>
            <person name="Fang J."/>
            <person name="Cheng X."/>
        </authorList>
    </citation>
    <scope>X-RAY CRYSTALLOGRAPHY (2.31 ANGSTROMS) OF 40-53 IN COMPLEX WITH MPHOSPH8</scope>
    <scope>INTERACTION WITH MPHOSPH8</scope>
</reference>
<reference key="26">
    <citation type="journal article" date="2011" name="PLoS ONE">
        <title>Structural and histone binding ability characterizations of human PWWP domains.</title>
        <authorList>
            <person name="Wu H."/>
            <person name="Zeng H."/>
            <person name="Lam R."/>
            <person name="Tempel W."/>
            <person name="Amaya M.F."/>
            <person name="Xu C."/>
            <person name="Dombrovski L."/>
            <person name="Qiu W."/>
            <person name="Wang Y."/>
            <person name="Min J."/>
        </authorList>
    </citation>
    <scope>X-RAY CRYSTALLOGRAPHY (2.30 ANGSTROMS) OF 275-427</scope>
</reference>
<reference key="27">
    <citation type="journal article" date="2011" name="Blood">
        <title>Mutational spectrum analysis of chronic myelomonocytic leukemia includes genes associated with epigenetic regulation: UTX, EZH2, and DNMT3A.</title>
        <authorList>
            <person name="Jankowska A.M."/>
            <person name="Makishima H."/>
            <person name="Tiu R.V."/>
            <person name="Szpurka H."/>
            <person name="Huang Y."/>
            <person name="Traina F."/>
            <person name="Visconte V."/>
            <person name="Sugimoto Y."/>
            <person name="Prince C."/>
            <person name="O'Keefe C."/>
            <person name="Hsi E.D."/>
            <person name="List A."/>
            <person name="Sekeres M.A."/>
            <person name="Rao A."/>
            <person name="McDevitt M.A."/>
            <person name="Maciejewski J.P."/>
        </authorList>
    </citation>
    <scope>VARIANTS ASP-699; PHE-731 DEL; CYS-882; HIS-882 AND PRO-882</scope>
</reference>
<reference key="28">
    <citation type="journal article" date="2017" name="Clin. Genet.">
        <title>Novel DNMT3A germline mutations are associated with inherited Tatton-Brown-Rahman syndrome.</title>
        <authorList>
            <person name="Xin B."/>
            <person name="Cruz Marino T."/>
            <person name="Szekely J."/>
            <person name="Leblanc J."/>
            <person name="Cechner K."/>
            <person name="Sency V."/>
            <person name="Wensel C."/>
            <person name="Barabas M."/>
            <person name="Therriault V."/>
            <person name="Wang H."/>
        </authorList>
    </citation>
    <scope>VARIANT TBRS GLN-771</scope>
</reference>
<reference key="29">
    <citation type="journal article" date="2016" name="J. Med. Genet.">
        <title>SETD2 and DNMT3A screen in the Sotos-like syndrome French cohort.</title>
        <authorList>
            <person name="Tlemsani C."/>
            <person name="Luscan A."/>
            <person name="Leulliot N."/>
            <person name="Bieth E."/>
            <person name="Afenjar A."/>
            <person name="Baujat G."/>
            <person name="Doco-Fenzy M."/>
            <person name="Goldenberg A."/>
            <person name="Lacombe D."/>
            <person name="Lambert L."/>
            <person name="Odent S."/>
            <person name="Pasche J."/>
            <person name="Sigaudy S."/>
            <person name="Buffet A."/>
            <person name="Violle-Poirsier C."/>
            <person name="Briand-Suleau A."/>
            <person name="Laurendeau I."/>
            <person name="Chin M."/>
            <person name="Saugier-Veber P."/>
            <person name="Vidaud D."/>
            <person name="Cormier-Daire V."/>
            <person name="Vidaud M."/>
            <person name="Pasmant E."/>
            <person name="Burglen L."/>
        </authorList>
    </citation>
    <scope>VARIANTS TBRS CYS-365; ASN-529; GLY-778 AND CYS-882</scope>
</reference>
<reference key="30">
    <citation type="journal article" date="2017" name="Am. J. Med. Genet. A">
        <title>Acute myeloid leukemia-associated DNMT3A p.Arg882His mutation in a patient with Tatton-Brown-Rahman overgrowth syndrome as a constitutional mutation.</title>
        <authorList>
            <person name="Kosaki R."/>
            <person name="Terashima H."/>
            <person name="Kubota M."/>
            <person name="Kosaki K."/>
        </authorList>
    </citation>
    <scope>VARIANT TBRS HIS-882</scope>
</reference>
<reference key="31">
    <citation type="journal article" date="2017" name="Am. J. Med. Genet. A">
        <title>The spectrum of DNMT3A variants in Tatton-Brown-Rahman syndrome overlaps with that in hematologic malignancies.</title>
        <authorList>
            <person name="Shen W."/>
            <person name="Heeley J.M."/>
            <person name="Carlston C.M."/>
            <person name="Acuna-Hidalgo R."/>
            <person name="Nillesen W.M."/>
            <person name="Dent K.M."/>
            <person name="Douglas G.V."/>
            <person name="Levine K.L."/>
            <person name="Bayrak-Toydemir P."/>
            <person name="Marcelis C.L."/>
            <person name="Shinawi M."/>
            <person name="Carey J.C."/>
        </authorList>
    </citation>
    <scope>VARIANTS TBRS CYS-882 AND HIS-882</scope>
</reference>
<reference key="32">
    <citation type="journal article" date="2017" name="J. Med. Genet.">
        <title>Acute myeloid leukaemia in a case with Tatton-Brown-Rahman syndrome: the peculiar DNMT3A R882 mutation.</title>
        <authorList>
            <person name="Hollink I.H.I.M."/>
            <person name="van den Ouweland A.M.W."/>
            <person name="Beverloo H.B."/>
            <person name="Arentsen-Peters S.T.C.J.M."/>
            <person name="Zwaan C.M."/>
            <person name="Wagner A."/>
        </authorList>
    </citation>
    <scope>VARIANT TBRS CYS-882</scope>
</reference>
<organism>
    <name type="scientific">Homo sapiens</name>
    <name type="common">Human</name>
    <dbReference type="NCBI Taxonomy" id="9606"/>
    <lineage>
        <taxon>Eukaryota</taxon>
        <taxon>Metazoa</taxon>
        <taxon>Chordata</taxon>
        <taxon>Craniata</taxon>
        <taxon>Vertebrata</taxon>
        <taxon>Euteleostomi</taxon>
        <taxon>Mammalia</taxon>
        <taxon>Eutheria</taxon>
        <taxon>Euarchontoglires</taxon>
        <taxon>Primates</taxon>
        <taxon>Haplorrhini</taxon>
        <taxon>Catarrhini</taxon>
        <taxon>Hominidae</taxon>
        <taxon>Homo</taxon>
    </lineage>
</organism>
<sequence>MPAMPSSGPGDTSSSAAEREEDRKDGEEQEEPRGKEERQEPSTTARKVGRPGRKRKHPPVESGDTPKDPAVISKSPSMAQDSGASELLPNGDLEKRSEPQPEEGSPAGGQKGGAPAEGEGAAETLPEASRAVENGCCTPKEGRGAPAEAGKEQKETNIESMKMEGSRGRLRGGLGWESSLRQRPMPRLTFQAGDPYYISKRKRDEWLARWKREAEKKAKVIAGMNAVEENQGPGESQKVEEASPPAVQQPTDPASPTVATTPEPVGSDAGDKNATKAGDDEPEYEDGRGFGIGELVWGKLRGFSWWPGRIVSWWMTGRSRAAEGTRWVMWFGDGKFSVVCVEKLMPLSSFCSAFHQATYNKQPMYRKAIYEVLQVASSRAGKLFPVCHDSDESDTAKAVEVQNKPMIEWALGGFQPSGPKGLEPPEEEKNPYKEVYTDMWVEPEAAAYAPPPPAKKPRKSTAEKPKVKEIIDERTRERLVYEVRQKCRNIEDICISCGSLNVTLEHPLFVGGMCQNCKNCFLECAYQYDDDGYQSYCTICCGGREVLMCGNNNCCRCFCVECVDLLVGPGAAQAAIKEDPWNCYMCGHKGTYGLLRRREDWPSRLQMFFANNHDQEFDPPKVYPPVPAEKRKPIRVLSLFDGIATGLLVLKDLGIQVDRYIASEVCEDSITVGMVRHQGKIMYVGDVRSVTQKHIQEWGPFDLVIGGSPCNDLSIVNPARKGLYEGTGRLFFEFYRLLHDARPKEGDDRPFFWLFENVVAMGVSDKRDISRFLESNPVMIDAKEVSAAHRARYFWGNLPGMNRPLASTVNDKLELQECLEHGRIAKFSKVRTITTRSNSIKQGKDQHFPVFMNEKEDILWCTEMERVFGFPVHYTDVSNMSRLARQRLLGRSWSVPVIRHLFAPLKEYFACV</sequence>
<name>DNM3A_HUMAN</name>
<proteinExistence type="evidence at protein level"/>
<feature type="chain" id="PRO_0000088043" description="DNA (cytosine-5)-methyltransferase 3A">
    <location>
        <begin position="1"/>
        <end position="912"/>
    </location>
</feature>
<feature type="domain" description="PWWP" evidence="3">
    <location>
        <begin position="292"/>
        <end position="350"/>
    </location>
</feature>
<feature type="domain" description="ADD" evidence="4">
    <location>
        <begin position="482"/>
        <end position="614"/>
    </location>
</feature>
<feature type="domain" description="SAM-dependent MTase C5-type" evidence="5">
    <location>
        <begin position="634"/>
        <end position="912"/>
    </location>
</feature>
<feature type="zinc finger region" description="GATA-type; atypical" evidence="4">
    <location>
        <begin position="493"/>
        <end position="523"/>
    </location>
</feature>
<feature type="zinc finger region" description="PHD-type; atypical" evidence="4">
    <location>
        <begin position="534"/>
        <end position="590"/>
    </location>
</feature>
<feature type="region of interest" description="Disordered" evidence="7">
    <location>
        <begin position="1"/>
        <end position="178"/>
    </location>
</feature>
<feature type="region of interest" description="Interaction with DNMT1 and DNMT3B" evidence="10">
    <location>
        <begin position="199"/>
        <end position="403"/>
    </location>
</feature>
<feature type="region of interest" description="Disordered" evidence="7">
    <location>
        <begin position="221"/>
        <end position="286"/>
    </location>
</feature>
<feature type="region of interest" description="Disordered" evidence="7">
    <location>
        <begin position="447"/>
        <end position="466"/>
    </location>
</feature>
<feature type="region of interest" description="Interaction with the PRC2/EED-EZH2 complex" evidence="1">
    <location>
        <begin position="494"/>
        <end position="586"/>
    </location>
</feature>
<feature type="compositionally biased region" description="Basic and acidic residues" evidence="7">
    <location>
        <begin position="17"/>
        <end position="40"/>
    </location>
</feature>
<feature type="compositionally biased region" description="Basic residues" evidence="7">
    <location>
        <begin position="47"/>
        <end position="57"/>
    </location>
</feature>
<feature type="compositionally biased region" description="Polar residues" evidence="7">
    <location>
        <begin position="74"/>
        <end position="83"/>
    </location>
</feature>
<feature type="compositionally biased region" description="Low complexity" evidence="7">
    <location>
        <begin position="113"/>
        <end position="128"/>
    </location>
</feature>
<feature type="compositionally biased region" description="Basic and acidic residues" evidence="7">
    <location>
        <begin position="149"/>
        <end position="167"/>
    </location>
</feature>
<feature type="compositionally biased region" description="Polar residues" evidence="7">
    <location>
        <begin position="246"/>
        <end position="260"/>
    </location>
</feature>
<feature type="compositionally biased region" description="Basic and acidic residues" evidence="7">
    <location>
        <begin position="269"/>
        <end position="279"/>
    </location>
</feature>
<feature type="active site" evidence="5 6">
    <location>
        <position position="710"/>
    </location>
</feature>
<feature type="binding site" evidence="13 30">
    <location>
        <begin position="641"/>
        <end position="645"/>
    </location>
    <ligand>
        <name>S-adenosyl-L-methionine</name>
        <dbReference type="ChEBI" id="CHEBI:59789"/>
    </ligand>
</feature>
<feature type="binding site" evidence="13 30">
    <location>
        <position position="664"/>
    </location>
    <ligand>
        <name>S-adenosyl-L-methionine</name>
        <dbReference type="ChEBI" id="CHEBI:59789"/>
    </ligand>
</feature>
<feature type="binding site" evidence="13 30">
    <location>
        <begin position="686"/>
        <end position="688"/>
    </location>
    <ligand>
        <name>S-adenosyl-L-methionine</name>
        <dbReference type="ChEBI" id="CHEBI:59789"/>
    </ligand>
</feature>
<feature type="binding site" evidence="13 30">
    <location>
        <begin position="891"/>
        <end position="893"/>
    </location>
    <ligand>
        <name>S-adenosyl-L-methionine</name>
        <dbReference type="ChEBI" id="CHEBI:59789"/>
    </ligand>
</feature>
<feature type="modified residue" description="Phosphoserine" evidence="31 32 34 35">
    <location>
        <position position="105"/>
    </location>
</feature>
<feature type="modified residue" description="Phosphothreonine" evidence="2">
    <location>
        <position position="124"/>
    </location>
</feature>
<feature type="modified residue" description="Omega-N-methylarginine" evidence="1">
    <location>
        <position position="171"/>
    </location>
</feature>
<feature type="modified residue" description="Phosphoserine" evidence="33 34">
    <location>
        <position position="243"/>
    </location>
</feature>
<feature type="modified residue" description="Phosphoserine" evidence="34">
    <location>
        <position position="255"/>
    </location>
</feature>
<feature type="modified residue" description="Phosphothreonine" evidence="34">
    <location>
        <position position="261"/>
    </location>
</feature>
<feature type="modified residue" description="Phosphoserine" evidence="34">
    <location>
        <position position="267"/>
    </location>
</feature>
<feature type="modified residue" description="Phosphoserine" evidence="1">
    <location>
        <position position="390"/>
    </location>
</feature>
<feature type="modified residue" description="Phosphoserine" evidence="1">
    <location>
        <position position="393"/>
    </location>
</feature>
<feature type="modified residue" description="S-methylcysteine; by autocatalysis" evidence="1">
    <location>
        <position position="710"/>
    </location>
</feature>
<feature type="cross-link" description="Glycyl lysine isopeptide (Lys-Gly) (interchain with G-Cter in SUMO2)" evidence="36">
    <location>
        <position position="162"/>
    </location>
</feature>
<feature type="splice variant" id="VSP_046254" description="In isoform 2." evidence="27">
    <original>MPAMPSSGPGDTSSSAAEREEDRKDGEEQEEPRGKEERQEPSTTARKVGRPGRKRKHPPVESGDTPKDPAVISKSPSMAQDSGASELLPNGDLEKRSEPQPEEGSPAGGQKGGAPAEGEGAAETLPEASRAVENGCCTPKEGRGAPAEAGKEQKETNIESMKMEGSRGRLRGGLGWESSLRQRPMPRLTFQAGDPYYISKRKRDEWLARWKRE</original>
    <variation>MGILERVVRRNGRVDRSLKDECDT</variation>
    <location>
        <begin position="1"/>
        <end position="213"/>
    </location>
</feature>
<feature type="splice variant" id="VSP_040998" description="In isoform 3." evidence="28">
    <original>KEQKETNIESMKMEGS</original>
    <variation>ESSAPGAASSGPTSIP</variation>
    <location>
        <begin position="151"/>
        <end position="166"/>
    </location>
</feature>
<feature type="splice variant" id="VSP_040999" description="In isoform 3." evidence="28">
    <location>
        <begin position="167"/>
        <end position="912"/>
    </location>
</feature>
<feature type="sequence variant" id="VAR_071463" description="In TBRS; somatic mutation; dbSNP:rs587777508." evidence="19">
    <original>I</original>
    <variation>N</variation>
    <location>
        <position position="310"/>
    </location>
</feature>
<feature type="sequence variant" id="VAR_083539" description="In HESJAS; no effect on protein expression; changed DNA methylation; results in aberrant expression of genes involved in developmental processes." evidence="25">
    <original>W</original>
    <variation>R</variation>
    <location>
        <position position="330"/>
    </location>
</feature>
<feature type="sequence variant" id="VAR_083540" description="In HESJAS; changed DNA methylation; results in aberrant expression of genes involved in developmental processes." evidence="25">
    <original>D</original>
    <variation>N</variation>
    <location>
        <position position="333"/>
    </location>
</feature>
<feature type="sequence variant" id="VAR_077522" description="In TBRS; uncertain significance; dbSNP:rs144062658." evidence="20">
    <original>Y</original>
    <variation>C</variation>
    <location>
        <position position="365"/>
    </location>
</feature>
<feature type="sequence variant" id="VAR_077523" description="In TBRS; uncertain significance; dbSNP:rs962805778." evidence="20">
    <original>D</original>
    <variation>N</variation>
    <location>
        <position position="529"/>
    </location>
</feature>
<feature type="sequence variant" id="VAR_071464" description="In TBRS; somatic mutation; dbSNP:rs951361433." evidence="19">
    <original>G</original>
    <variation>S</variation>
    <location>
        <position position="532"/>
    </location>
</feature>
<feature type="sequence variant" id="VAR_071465" description="In TBRS; somatic mutation; dbSNP:rs587777509." evidence="19">
    <original>M</original>
    <variation>K</variation>
    <location>
        <position position="548"/>
    </location>
</feature>
<feature type="sequence variant" id="VAR_071466" description="In TBRS; somatic mutation." evidence="19">
    <original>C</original>
    <variation>R</variation>
    <location>
        <position position="549"/>
    </location>
</feature>
<feature type="sequence variant" id="VAR_071467" description="In TBRS; somatic mutation; dbSNP:rs587777507." evidence="19">
    <original>L</original>
    <variation>P</variation>
    <location>
        <position position="648"/>
    </location>
</feature>
<feature type="sequence variant" id="VAR_067234" description="In a patient with chronic myelomonocytic leukemia; dbSNP:rs761064473." evidence="17">
    <original>G</original>
    <variation>D</variation>
    <location>
        <position position="699"/>
    </location>
</feature>
<feature type="sequence variant" id="VAR_071468" description="In TBRS; somatic mutation; dbSNP:rs772368909." evidence="19">
    <original>P</original>
    <variation>L</variation>
    <location>
        <position position="700"/>
    </location>
</feature>
<feature type="sequence variant" id="VAR_067235" description="In a patient with chronic myelomonocytic leukemia." evidence="17">
    <location>
        <position position="731"/>
    </location>
</feature>
<feature type="sequence variant" id="VAR_071469" description="In TBRS; somatic mutation; dbSNP:rs754613602." evidence="19">
    <original>R</original>
    <variation>C</variation>
    <location>
        <position position="749"/>
    </location>
</feature>
<feature type="sequence variant" id="VAR_077524" description="In TBRS; uncertain significance; dbSNP:rs757823678." evidence="21">
    <original>R</original>
    <variation>Q</variation>
    <location>
        <position position="771"/>
    </location>
</feature>
<feature type="sequence variant" id="VAR_077525" description="In TBRS; uncertain significance; dbSNP:rs979932565." evidence="20">
    <original>V</original>
    <variation>G</variation>
    <location>
        <position position="778"/>
    </location>
</feature>
<feature type="sequence variant" id="VAR_071470" description="In TBRS; somatic mutation; dbSNP:rs961377711." evidence="19">
    <original>N</original>
    <variation>D</variation>
    <location>
        <position position="838"/>
    </location>
</feature>
<feature type="sequence variant" id="VAR_067236" description="In TBRS and AML; somatic variant in AML; dbSNP:rs377577594." evidence="16 17 23 24">
    <original>R</original>
    <variation>C</variation>
    <location>
        <position position="882"/>
    </location>
</feature>
<feature type="sequence variant" id="VAR_067237" description="In TBRS and AML; somatic variant in AML; dbSNP:rs147001633." evidence="16 17 22 24">
    <original>R</original>
    <variation>H</variation>
    <location>
        <position position="882"/>
    </location>
</feature>
<feature type="sequence variant" id="VAR_067238" description="In a patient with chronic myelomonocytic leukemia; somatic mutation; dbSNP:rs147001633." evidence="17">
    <original>R</original>
    <variation>P</variation>
    <location>
        <position position="882"/>
    </location>
</feature>
<feature type="sequence variant" id="VAR_071471" description="In TBRS; somatic mutation; dbSNP:rs587777510." evidence="19">
    <original>F</original>
    <variation>S</variation>
    <location>
        <position position="902"/>
    </location>
</feature>
<feature type="sequence variant" id="VAR_071472" description="In TBRS; somatic mutation; dbSNP:rs149095705." evidence="19">
    <original>P</original>
    <variation>L</variation>
    <location>
        <position position="904"/>
    </location>
</feature>
<feature type="mutagenesis site" description="Loss of activity due to the incapacity to bind the regulatory subunit DNMT3L." evidence="13">
    <original>F</original>
    <variation>A</variation>
    <location>
        <position position="732"/>
    </location>
</feature>
<feature type="helix" evidence="46">
    <location>
        <begin position="200"/>
        <end position="209"/>
    </location>
</feature>
<feature type="strand" evidence="37">
    <location>
        <begin position="295"/>
        <end position="298"/>
    </location>
</feature>
<feature type="strand" evidence="37">
    <location>
        <begin position="306"/>
        <end position="311"/>
    </location>
</feature>
<feature type="helix" evidence="37">
    <location>
        <begin position="313"/>
        <end position="315"/>
    </location>
</feature>
<feature type="strand" evidence="37">
    <location>
        <begin position="325"/>
        <end position="330"/>
    </location>
</feature>
<feature type="turn" evidence="37">
    <location>
        <begin position="331"/>
        <end position="333"/>
    </location>
</feature>
<feature type="strand" evidence="37">
    <location>
        <begin position="336"/>
        <end position="340"/>
    </location>
</feature>
<feature type="helix" evidence="37">
    <location>
        <begin position="341"/>
        <end position="343"/>
    </location>
</feature>
<feature type="strand" evidence="37">
    <location>
        <begin position="344"/>
        <end position="346"/>
    </location>
</feature>
<feature type="helix" evidence="37">
    <location>
        <begin position="347"/>
        <end position="349"/>
    </location>
</feature>
<feature type="helix" evidence="37">
    <location>
        <begin position="350"/>
        <end position="353"/>
    </location>
</feature>
<feature type="helix" evidence="37">
    <location>
        <begin position="356"/>
        <end position="361"/>
    </location>
</feature>
<feature type="helix" evidence="37">
    <location>
        <begin position="363"/>
        <end position="380"/>
    </location>
</feature>
<feature type="helix" evidence="37">
    <location>
        <begin position="393"/>
        <end position="395"/>
    </location>
</feature>
<feature type="helix" evidence="37">
    <location>
        <begin position="399"/>
        <end position="411"/>
    </location>
</feature>
<feature type="turn" evidence="37">
    <location>
        <begin position="415"/>
        <end position="417"/>
    </location>
</feature>
<feature type="helix" evidence="37">
    <location>
        <begin position="419"/>
        <end position="422"/>
    </location>
</feature>
<feature type="helix" evidence="43">
    <location>
        <begin position="476"/>
        <end position="484"/>
    </location>
</feature>
<feature type="helix" evidence="43">
    <location>
        <begin position="490"/>
        <end position="492"/>
    </location>
</feature>
<feature type="turn" evidence="43">
    <location>
        <begin position="495"/>
        <end position="497"/>
    </location>
</feature>
<feature type="strand" evidence="43">
    <location>
        <begin position="502"/>
        <end position="505"/>
    </location>
</feature>
<feature type="strand" evidence="43">
    <location>
        <begin position="507"/>
        <end position="514"/>
    </location>
</feature>
<feature type="helix" evidence="43">
    <location>
        <begin position="515"/>
        <end position="524"/>
    </location>
</feature>
<feature type="strand" evidence="43">
    <location>
        <begin position="532"/>
        <end position="536"/>
    </location>
</feature>
<feature type="turn" evidence="43">
    <location>
        <begin position="538"/>
        <end position="540"/>
    </location>
</feature>
<feature type="strand" evidence="43">
    <location>
        <begin position="544"/>
        <end position="548"/>
    </location>
</feature>
<feature type="turn" evidence="43">
    <location>
        <begin position="552"/>
        <end position="554"/>
    </location>
</feature>
<feature type="strand" evidence="43">
    <location>
        <begin position="557"/>
        <end position="559"/>
    </location>
</feature>
<feature type="helix" evidence="43">
    <location>
        <begin position="560"/>
        <end position="566"/>
    </location>
</feature>
<feature type="helix" evidence="43">
    <location>
        <begin position="571"/>
        <end position="575"/>
    </location>
</feature>
<feature type="strand" evidence="39">
    <location>
        <begin position="578"/>
        <end position="580"/>
    </location>
</feature>
<feature type="turn" evidence="43">
    <location>
        <begin position="584"/>
        <end position="586"/>
    </location>
</feature>
<feature type="strand" evidence="38">
    <location>
        <begin position="587"/>
        <end position="589"/>
    </location>
</feature>
<feature type="strand" evidence="43">
    <location>
        <begin position="595"/>
        <end position="597"/>
    </location>
</feature>
<feature type="helix" evidence="43">
    <location>
        <begin position="601"/>
        <end position="608"/>
    </location>
</feature>
<feature type="helix" evidence="40">
    <location>
        <begin position="628"/>
        <end position="630"/>
    </location>
</feature>
<feature type="strand" evidence="41">
    <location>
        <begin position="634"/>
        <end position="640"/>
    </location>
</feature>
<feature type="turn" evidence="41">
    <location>
        <begin position="642"/>
        <end position="644"/>
    </location>
</feature>
<feature type="helix" evidence="41">
    <location>
        <begin position="645"/>
        <end position="652"/>
    </location>
</feature>
<feature type="strand" evidence="41">
    <location>
        <begin position="657"/>
        <end position="663"/>
    </location>
</feature>
<feature type="helix" evidence="41">
    <location>
        <begin position="667"/>
        <end position="676"/>
    </location>
</feature>
<feature type="turn" evidence="41">
    <location>
        <begin position="677"/>
        <end position="679"/>
    </location>
</feature>
<feature type="strand" evidence="41">
    <location>
        <begin position="681"/>
        <end position="683"/>
    </location>
</feature>
<feature type="helix" evidence="41">
    <location>
        <begin position="687"/>
        <end position="689"/>
    </location>
</feature>
<feature type="helix" evidence="41">
    <location>
        <begin position="692"/>
        <end position="698"/>
    </location>
</feature>
<feature type="strand" evidence="41">
    <location>
        <begin position="702"/>
        <end position="706"/>
    </location>
</feature>
<feature type="turn" evidence="41">
    <location>
        <begin position="711"/>
        <end position="713"/>
    </location>
</feature>
<feature type="strand" evidence="44">
    <location>
        <begin position="714"/>
        <end position="716"/>
    </location>
</feature>
<feature type="strand" evidence="45">
    <location>
        <begin position="723"/>
        <end position="725"/>
    </location>
</feature>
<feature type="turn" evidence="41">
    <location>
        <begin position="726"/>
        <end position="729"/>
    </location>
</feature>
<feature type="helix" evidence="41">
    <location>
        <begin position="730"/>
        <end position="741"/>
    </location>
</feature>
<feature type="strand" evidence="41">
    <location>
        <begin position="752"/>
        <end position="761"/>
    </location>
</feature>
<feature type="helix" evidence="41">
    <location>
        <begin position="763"/>
        <end position="773"/>
    </location>
</feature>
<feature type="strand" evidence="41">
    <location>
        <begin position="778"/>
        <end position="781"/>
    </location>
</feature>
<feature type="helix" evidence="41">
    <location>
        <begin position="782"/>
        <end position="784"/>
    </location>
</feature>
<feature type="strand" evidence="41">
    <location>
        <begin position="786"/>
        <end position="788"/>
    </location>
</feature>
<feature type="strand" evidence="41">
    <location>
        <begin position="791"/>
        <end position="796"/>
    </location>
</feature>
<feature type="turn" evidence="41">
    <location>
        <begin position="799"/>
        <end position="802"/>
    </location>
</feature>
<feature type="helix" evidence="41">
    <location>
        <begin position="815"/>
        <end position="818"/>
    </location>
</feature>
<feature type="strand" evidence="41">
    <location>
        <begin position="824"/>
        <end position="826"/>
    </location>
</feature>
<feature type="strand" evidence="41">
    <location>
        <begin position="828"/>
        <end position="830"/>
    </location>
</feature>
<feature type="helix" evidence="41">
    <location>
        <begin position="837"/>
        <end position="839"/>
    </location>
</feature>
<feature type="strand" evidence="42">
    <location>
        <begin position="840"/>
        <end position="842"/>
    </location>
</feature>
<feature type="turn" evidence="41">
    <location>
        <begin position="843"/>
        <end position="846"/>
    </location>
</feature>
<feature type="strand" evidence="41">
    <location>
        <begin position="849"/>
        <end position="852"/>
    </location>
</feature>
<feature type="strand" evidence="41">
    <location>
        <begin position="855"/>
        <end position="857"/>
    </location>
</feature>
<feature type="helix" evidence="41">
    <location>
        <begin position="861"/>
        <end position="868"/>
    </location>
</feature>
<feature type="turn" evidence="41">
    <location>
        <begin position="872"/>
        <end position="875"/>
    </location>
</feature>
<feature type="helix" evidence="41">
    <location>
        <begin position="882"/>
        <end position="890"/>
    </location>
</feature>
<feature type="helix" evidence="41">
    <location>
        <begin position="895"/>
        <end position="902"/>
    </location>
</feature>
<feature type="helix" evidence="41">
    <location>
        <begin position="903"/>
        <end position="907"/>
    </location>
</feature>
<gene>
    <name type="primary">DNMT3A</name>
</gene>
<protein>
    <recommendedName>
        <fullName>DNA (cytosine-5)-methyltransferase 3A</fullName>
        <shortName>Dnmt3a</shortName>
        <ecNumber evidence="9">2.1.1.37</ecNumber>
    </recommendedName>
    <alternativeName>
        <fullName evidence="29">Cysteine methyltransferase DNMT3A</fullName>
        <ecNumber evidence="1">2.1.1.-</ecNumber>
    </alternativeName>
    <alternativeName>
        <fullName>DNA methyltransferase HsaIIIA</fullName>
        <shortName>DNA MTase HsaIIIA</shortName>
        <shortName>M.HsaIIIA</shortName>
    </alternativeName>
</protein>
<accession>Q9Y6K1</accession>
<accession>E9PEB8</accession>
<accession>Q86TE8</accession>
<accession>Q86XF5</accession>
<accession>Q8IZV0</accession>
<accession>Q8WXU9</accession>
<dbReference type="EC" id="2.1.1.37" evidence="9"/>
<dbReference type="EC" id="2.1.1.-" evidence="1"/>
<dbReference type="EMBL" id="AF067972">
    <property type="protein sequence ID" value="AAD33084.2"/>
    <property type="molecule type" value="mRNA"/>
</dbReference>
<dbReference type="EMBL" id="AF480163">
    <property type="protein sequence ID" value="AAN40037.1"/>
    <property type="status" value="ALT_INIT"/>
    <property type="molecule type" value="mRNA"/>
</dbReference>
<dbReference type="EMBL" id="AF331856">
    <property type="protein sequence ID" value="AAL57039.1"/>
    <property type="status" value="ALT_INIT"/>
    <property type="molecule type" value="mRNA"/>
</dbReference>
<dbReference type="EMBL" id="AC012074">
    <property type="protein sequence ID" value="AAY14761.1"/>
    <property type="molecule type" value="Genomic_DNA"/>
</dbReference>
<dbReference type="EMBL" id="CH471053">
    <property type="protein sequence ID" value="EAX00727.1"/>
    <property type="molecule type" value="Genomic_DNA"/>
</dbReference>
<dbReference type="EMBL" id="BC032392">
    <property type="protein sequence ID" value="AAH32392.1"/>
    <property type="molecule type" value="mRNA"/>
</dbReference>
<dbReference type="EMBL" id="BC043617">
    <property type="protein sequence ID" value="AAH43617.1"/>
    <property type="molecule type" value="mRNA"/>
</dbReference>
<dbReference type="EMBL" id="BC051864">
    <property type="protein sequence ID" value="AAH51864.1"/>
    <property type="molecule type" value="mRNA"/>
</dbReference>
<dbReference type="CCDS" id="CCDS1718.2">
    <molecule id="Q9Y6K1-2"/>
</dbReference>
<dbReference type="CCDS" id="CCDS33157.1">
    <molecule id="Q9Y6K1-1"/>
</dbReference>
<dbReference type="CCDS" id="CCDS46232.1">
    <molecule id="Q9Y6K1-3"/>
</dbReference>
<dbReference type="RefSeq" id="NP_001307821.1">
    <molecule id="Q9Y6K1-3"/>
    <property type="nucleotide sequence ID" value="NM_001320892.2"/>
</dbReference>
<dbReference type="RefSeq" id="NP_001307822.1">
    <property type="nucleotide sequence ID" value="NM_001320893.1"/>
</dbReference>
<dbReference type="RefSeq" id="NP_072046.2">
    <molecule id="Q9Y6K1-1"/>
    <property type="nucleotide sequence ID" value="NM_022552.4"/>
</dbReference>
<dbReference type="RefSeq" id="NP_715640.2">
    <molecule id="Q9Y6K1-2"/>
    <property type="nucleotide sequence ID" value="NM_153759.3"/>
</dbReference>
<dbReference type="RefSeq" id="NP_783328.1">
    <molecule id="Q9Y6K1-1"/>
    <property type="nucleotide sequence ID" value="NM_175629.2"/>
</dbReference>
<dbReference type="RefSeq" id="NP_783329.1">
    <molecule id="Q9Y6K1-3"/>
    <property type="nucleotide sequence ID" value="NM_175630.1"/>
</dbReference>
<dbReference type="RefSeq" id="XP_005264232.1">
    <molecule id="Q9Y6K1-1"/>
    <property type="nucleotide sequence ID" value="XM_005264175.6"/>
</dbReference>
<dbReference type="RefSeq" id="XP_005264234.1">
    <property type="nucleotide sequence ID" value="XM_005264177.4"/>
</dbReference>
<dbReference type="RefSeq" id="XP_011530969.1">
    <property type="nucleotide sequence ID" value="XM_011532667.2"/>
</dbReference>
<dbReference type="RefSeq" id="XP_016859015.1">
    <molecule id="Q9Y6K1-1"/>
    <property type="nucleotide sequence ID" value="XM_017003526.2"/>
</dbReference>
<dbReference type="RefSeq" id="XP_016859016.1">
    <property type="nucleotide sequence ID" value="XM_017003527.1"/>
</dbReference>
<dbReference type="RefSeq" id="XP_054196875.1">
    <molecule id="Q9Y6K1-1"/>
    <property type="nucleotide sequence ID" value="XM_054340900.1"/>
</dbReference>
<dbReference type="RefSeq" id="XP_054196876.1">
    <molecule id="Q9Y6K1-1"/>
    <property type="nucleotide sequence ID" value="XM_054340901.1"/>
</dbReference>
<dbReference type="PDB" id="2QRV">
    <property type="method" value="X-ray"/>
    <property type="resolution" value="2.89 A"/>
    <property type="chains" value="A/D/E/H=627-912"/>
</dbReference>
<dbReference type="PDB" id="3A1A">
    <property type="method" value="X-ray"/>
    <property type="resolution" value="2.30 A"/>
    <property type="chains" value="A=476-614"/>
</dbReference>
<dbReference type="PDB" id="3A1B">
    <property type="method" value="X-ray"/>
    <property type="resolution" value="2.29 A"/>
    <property type="chains" value="A=476-614"/>
</dbReference>
<dbReference type="PDB" id="3LLR">
    <property type="method" value="X-ray"/>
    <property type="resolution" value="2.30 A"/>
    <property type="chains" value="A/B/C/D/E=275-427"/>
</dbReference>
<dbReference type="PDB" id="3SVM">
    <property type="method" value="X-ray"/>
    <property type="resolution" value="2.31 A"/>
    <property type="chains" value="P=40-53"/>
</dbReference>
<dbReference type="PDB" id="4QBQ">
    <property type="method" value="X-ray"/>
    <property type="resolution" value="2.41 A"/>
    <property type="chains" value="A/C=479-610"/>
</dbReference>
<dbReference type="PDB" id="4QBR">
    <property type="method" value="X-ray"/>
    <property type="resolution" value="1.90 A"/>
    <property type="chains" value="A/C=476-611"/>
</dbReference>
<dbReference type="PDB" id="4QBS">
    <property type="method" value="X-ray"/>
    <property type="resolution" value="1.80 A"/>
    <property type="chains" value="A=476-611"/>
</dbReference>
<dbReference type="PDB" id="4U7P">
    <property type="method" value="X-ray"/>
    <property type="resolution" value="3.82 A"/>
    <property type="chains" value="A=455-912"/>
</dbReference>
<dbReference type="PDB" id="4U7T">
    <property type="method" value="X-ray"/>
    <property type="resolution" value="2.90 A"/>
    <property type="chains" value="A/C=476-912"/>
</dbReference>
<dbReference type="PDB" id="5YX2">
    <property type="method" value="X-ray"/>
    <property type="resolution" value="2.65 A"/>
    <property type="chains" value="A/D=628-912"/>
</dbReference>
<dbReference type="PDB" id="6BRR">
    <property type="method" value="X-ray"/>
    <property type="resolution" value="2.97 A"/>
    <property type="chains" value="A/D=628-912"/>
</dbReference>
<dbReference type="PDB" id="6F57">
    <property type="method" value="X-ray"/>
    <property type="resolution" value="3.10 A"/>
    <property type="chains" value="A/D=628-912"/>
</dbReference>
<dbReference type="PDB" id="6PA7">
    <property type="method" value="EM"/>
    <property type="resolution" value="2.94 A"/>
    <property type="chains" value="K/P=224-912"/>
</dbReference>
<dbReference type="PDB" id="6W89">
    <property type="method" value="X-ray"/>
    <property type="resolution" value="2.50 A"/>
    <property type="chains" value="A/D/G/J=628-912"/>
</dbReference>
<dbReference type="PDB" id="6W8B">
    <property type="method" value="X-ray"/>
    <property type="resolution" value="2.40 A"/>
    <property type="chains" value="A/D/H/K=628-912"/>
</dbReference>
<dbReference type="PDB" id="6W8D">
    <property type="method" value="X-ray"/>
    <property type="resolution" value="2.60 A"/>
    <property type="chains" value="A/D=628-912"/>
</dbReference>
<dbReference type="PDB" id="6W8J">
    <property type="method" value="X-ray"/>
    <property type="resolution" value="2.44 A"/>
    <property type="chains" value="A/D=628-912"/>
</dbReference>
<dbReference type="PDB" id="8BA5">
    <property type="method" value="X-ray"/>
    <property type="resolution" value="1.45 A"/>
    <property type="chains" value="A=476-614"/>
</dbReference>
<dbReference type="PDB" id="8QZM">
    <property type="method" value="EM"/>
    <property type="resolution" value="3.10 A"/>
    <property type="chains" value="K=1-912"/>
</dbReference>
<dbReference type="PDB" id="8TDR">
    <property type="method" value="X-ray"/>
    <property type="resolution" value="3.32 A"/>
    <property type="chains" value="A/B/C/D/E/F/G/H=628-912"/>
</dbReference>
<dbReference type="PDB" id="8TE1">
    <property type="method" value="X-ray"/>
    <property type="resolution" value="2.48 A"/>
    <property type="chains" value="A/B/C/D/E/F/G/H=628-912"/>
</dbReference>
<dbReference type="PDB" id="8TE3">
    <property type="method" value="X-ray"/>
    <property type="resolution" value="3.20 A"/>
    <property type="chains" value="A/B/C/D/E/F/G/H=628-912"/>
</dbReference>
<dbReference type="PDB" id="8TE4">
    <property type="method" value="X-ray"/>
    <property type="resolution" value="2.65 A"/>
    <property type="chains" value="A/B/C/D/E/F/G/H=628-912"/>
</dbReference>
<dbReference type="PDB" id="8U5H">
    <property type="method" value="EM"/>
    <property type="resolution" value="3.23 A"/>
    <property type="chains" value="A/B=126-223"/>
</dbReference>
<dbReference type="PDB" id="8UW1">
    <property type="method" value="EM"/>
    <property type="resolution" value="2.88 A"/>
    <property type="chains" value="K=159-228"/>
</dbReference>
<dbReference type="PDBsum" id="2QRV"/>
<dbReference type="PDBsum" id="3A1A"/>
<dbReference type="PDBsum" id="3A1B"/>
<dbReference type="PDBsum" id="3LLR"/>
<dbReference type="PDBsum" id="3SVM"/>
<dbReference type="PDBsum" id="4QBQ"/>
<dbReference type="PDBsum" id="4QBR"/>
<dbReference type="PDBsum" id="4QBS"/>
<dbReference type="PDBsum" id="4U7P"/>
<dbReference type="PDBsum" id="4U7T"/>
<dbReference type="PDBsum" id="5YX2"/>
<dbReference type="PDBsum" id="6BRR"/>
<dbReference type="PDBsum" id="6F57"/>
<dbReference type="PDBsum" id="6PA7"/>
<dbReference type="PDBsum" id="6W89"/>
<dbReference type="PDBsum" id="6W8B"/>
<dbReference type="PDBsum" id="6W8D"/>
<dbReference type="PDBsum" id="6W8J"/>
<dbReference type="PDBsum" id="8BA5"/>
<dbReference type="PDBsum" id="8QZM"/>
<dbReference type="PDBsum" id="8TDR"/>
<dbReference type="PDBsum" id="8TE1"/>
<dbReference type="PDBsum" id="8TE3"/>
<dbReference type="PDBsum" id="8TE4"/>
<dbReference type="PDBsum" id="8U5H"/>
<dbReference type="PDBsum" id="8UW1"/>
<dbReference type="EMDB" id="EMD-18778"/>
<dbReference type="EMDB" id="EMD-20281"/>
<dbReference type="EMDB" id="EMD-41922"/>
<dbReference type="EMDB" id="EMD-42636"/>
<dbReference type="SMR" id="Q9Y6K1"/>
<dbReference type="BioGRID" id="108125">
    <property type="interactions" value="105"/>
</dbReference>
<dbReference type="ComplexPortal" id="CPX-944">
    <property type="entry name" value="DNA (cytosine-5)-methyltransferase 3A complex"/>
</dbReference>
<dbReference type="CORUM" id="Q9Y6K1"/>
<dbReference type="DIP" id="DIP-38004N"/>
<dbReference type="FunCoup" id="Q9Y6K1">
    <property type="interactions" value="2489"/>
</dbReference>
<dbReference type="IntAct" id="Q9Y6K1">
    <property type="interactions" value="44"/>
</dbReference>
<dbReference type="MINT" id="Q9Y6K1"/>
<dbReference type="STRING" id="9606.ENSP00000264709"/>
<dbReference type="BindingDB" id="Q9Y6K1"/>
<dbReference type="ChEMBL" id="CHEMBL1992"/>
<dbReference type="DrugBank" id="DB01262">
    <property type="generic name" value="Decitabine"/>
</dbReference>
<dbReference type="DrugBank" id="DB00721">
    <property type="generic name" value="Procaine"/>
</dbReference>
<dbReference type="DrugCentral" id="Q9Y6K1"/>
<dbReference type="REBASE" id="4119">
    <property type="entry name" value="M.HsaDnmt3A"/>
</dbReference>
<dbReference type="GlyGen" id="Q9Y6K1">
    <property type="glycosylation" value="1 site, 1 O-linked glycan (1 site)"/>
</dbReference>
<dbReference type="iPTMnet" id="Q9Y6K1"/>
<dbReference type="PhosphoSitePlus" id="Q9Y6K1"/>
<dbReference type="SwissPalm" id="Q9Y6K1"/>
<dbReference type="BioMuta" id="DNMT3A"/>
<dbReference type="DMDM" id="166215081"/>
<dbReference type="jPOST" id="Q9Y6K1"/>
<dbReference type="MassIVE" id="Q9Y6K1"/>
<dbReference type="PaxDb" id="9606-ENSP00000264709"/>
<dbReference type="PeptideAtlas" id="Q9Y6K1"/>
<dbReference type="ProteomicsDB" id="19854"/>
<dbReference type="ProteomicsDB" id="86709">
    <molecule id="Q9Y6K1-1"/>
</dbReference>
<dbReference type="ProteomicsDB" id="86710">
    <molecule id="Q9Y6K1-2"/>
</dbReference>
<dbReference type="ProteomicsDB" id="86711">
    <molecule id="Q9Y6K1-3"/>
</dbReference>
<dbReference type="Pumba" id="Q9Y6K1"/>
<dbReference type="ABCD" id="Q9Y6K1">
    <property type="antibodies" value="1 sequenced antibody"/>
</dbReference>
<dbReference type="Antibodypedia" id="4006">
    <property type="antibodies" value="990 antibodies from 46 providers"/>
</dbReference>
<dbReference type="DNASU" id="1788"/>
<dbReference type="Ensembl" id="ENST00000264709.7">
    <molecule id="Q9Y6K1-1"/>
    <property type="protein sequence ID" value="ENSP00000264709.3"/>
    <property type="gene ID" value="ENSG00000119772.19"/>
</dbReference>
<dbReference type="Ensembl" id="ENST00000321117.10">
    <molecule id="Q9Y6K1-1"/>
    <property type="protein sequence ID" value="ENSP00000324375.5"/>
    <property type="gene ID" value="ENSG00000119772.19"/>
</dbReference>
<dbReference type="Ensembl" id="ENST00000380746.8">
    <molecule id="Q9Y6K1-2"/>
    <property type="protein sequence ID" value="ENSP00000370122.4"/>
    <property type="gene ID" value="ENSG00000119772.19"/>
</dbReference>
<dbReference type="Ensembl" id="ENST00000406659.3">
    <molecule id="Q9Y6K1-3"/>
    <property type="protein sequence ID" value="ENSP00000384852.3"/>
    <property type="gene ID" value="ENSG00000119772.19"/>
</dbReference>
<dbReference type="GeneID" id="1788"/>
<dbReference type="KEGG" id="hsa:1788"/>
<dbReference type="MANE-Select" id="ENST00000321117.10">
    <property type="protein sequence ID" value="ENSP00000324375.5"/>
    <property type="RefSeq nucleotide sequence ID" value="NM_022552.5"/>
    <property type="RefSeq protein sequence ID" value="NP_072046.2"/>
</dbReference>
<dbReference type="UCSC" id="uc002rgb.5">
    <molecule id="Q9Y6K1-1"/>
    <property type="organism name" value="human"/>
</dbReference>
<dbReference type="AGR" id="HGNC:2978"/>
<dbReference type="CTD" id="1788"/>
<dbReference type="DisGeNET" id="1788"/>
<dbReference type="GeneCards" id="DNMT3A"/>
<dbReference type="GeneReviews" id="DNMT3A"/>
<dbReference type="HGNC" id="HGNC:2978">
    <property type="gene designation" value="DNMT3A"/>
</dbReference>
<dbReference type="HPA" id="ENSG00000119772">
    <property type="expression patterns" value="Low tissue specificity"/>
</dbReference>
<dbReference type="MalaCards" id="DNMT3A"/>
<dbReference type="MIM" id="601626">
    <property type="type" value="phenotype"/>
</dbReference>
<dbReference type="MIM" id="602769">
    <property type="type" value="gene"/>
</dbReference>
<dbReference type="MIM" id="615879">
    <property type="type" value="phenotype"/>
</dbReference>
<dbReference type="MIM" id="618724">
    <property type="type" value="phenotype"/>
</dbReference>
<dbReference type="neXtProt" id="NX_Q9Y6K1"/>
<dbReference type="OpenTargets" id="ENSG00000119772"/>
<dbReference type="Orphanet" id="86845">
    <property type="disease" value="Acute myeloid leukaemia with myelodysplasia-related features"/>
</dbReference>
<dbReference type="Orphanet" id="658595">
    <property type="disease" value="DNMT3A-related microcephalic dwarfism"/>
</dbReference>
<dbReference type="Orphanet" id="276621">
    <property type="disease" value="Sporadic pheochromocytoma/secreting paraganglioma"/>
</dbReference>
<dbReference type="Orphanet" id="404443">
    <property type="disease" value="Tatton-Brown-Rahman syndrome"/>
</dbReference>
<dbReference type="PharmGKB" id="PA27445"/>
<dbReference type="VEuPathDB" id="HostDB:ENSG00000119772"/>
<dbReference type="eggNOG" id="ENOG502QR6U">
    <property type="taxonomic scope" value="Eukaryota"/>
</dbReference>
<dbReference type="GeneTree" id="ENSGT00940000155459"/>
<dbReference type="HOGENOM" id="CLU_121732_0_0_1"/>
<dbReference type="InParanoid" id="Q9Y6K1"/>
<dbReference type="OMA" id="HGRMAKF"/>
<dbReference type="OrthoDB" id="641149at2759"/>
<dbReference type="PAN-GO" id="Q9Y6K1">
    <property type="GO annotations" value="5 GO annotations based on evolutionary models"/>
</dbReference>
<dbReference type="PhylomeDB" id="Q9Y6K1"/>
<dbReference type="TreeFam" id="TF329039"/>
<dbReference type="BRENDA" id="2.1.1.37">
    <property type="organism ID" value="2681"/>
</dbReference>
<dbReference type="PathwayCommons" id="Q9Y6K1"/>
<dbReference type="Reactome" id="R-HSA-212300">
    <property type="pathway name" value="PRC2 methylates histones and DNA"/>
</dbReference>
<dbReference type="Reactome" id="R-HSA-3214858">
    <property type="pathway name" value="RMTs methylate histone arginines"/>
</dbReference>
<dbReference type="Reactome" id="R-HSA-4655427">
    <property type="pathway name" value="SUMOylation of DNA methylation proteins"/>
</dbReference>
<dbReference type="Reactome" id="R-HSA-5334118">
    <property type="pathway name" value="DNA methylation"/>
</dbReference>
<dbReference type="Reactome" id="R-HSA-9710421">
    <property type="pathway name" value="Defective pyroptosis"/>
</dbReference>
<dbReference type="Reactome" id="R-HSA-9845323">
    <property type="pathway name" value="Regulation of endogenous retroelements by Piwi-interacting RNAs (piRNAs)"/>
</dbReference>
<dbReference type="SignaLink" id="Q9Y6K1"/>
<dbReference type="SIGNOR" id="Q9Y6K1"/>
<dbReference type="BioGRID-ORCS" id="1788">
    <property type="hits" value="18 hits in 1173 CRISPR screens"/>
</dbReference>
<dbReference type="ChiTaRS" id="DNMT3A">
    <property type="organism name" value="human"/>
</dbReference>
<dbReference type="EvolutionaryTrace" id="Q9Y6K1"/>
<dbReference type="GenomeRNAi" id="1788"/>
<dbReference type="Pharos" id="Q9Y6K1">
    <property type="development level" value="Tclin"/>
</dbReference>
<dbReference type="PRO" id="PR:Q9Y6K1"/>
<dbReference type="Proteomes" id="UP000005640">
    <property type="component" value="Chromosome 2"/>
</dbReference>
<dbReference type="RNAct" id="Q9Y6K1">
    <property type="molecule type" value="protein"/>
</dbReference>
<dbReference type="Bgee" id="ENSG00000119772">
    <property type="expression patterns" value="Expressed in sural nerve and 144 other cell types or tissues"/>
</dbReference>
<dbReference type="ExpressionAtlas" id="Q9Y6K1">
    <property type="expression patterns" value="baseline and differential"/>
</dbReference>
<dbReference type="GO" id="GO:1902494">
    <property type="term" value="C:catalytic complex"/>
    <property type="evidence" value="ECO:0000353"/>
    <property type="project" value="ComplexPortal"/>
</dbReference>
<dbReference type="GO" id="GO:0000775">
    <property type="term" value="C:chromosome, centromeric region"/>
    <property type="evidence" value="ECO:0007669"/>
    <property type="project" value="Ensembl"/>
</dbReference>
<dbReference type="GO" id="GO:0005737">
    <property type="term" value="C:cytoplasm"/>
    <property type="evidence" value="ECO:0000314"/>
    <property type="project" value="UniProtKB"/>
</dbReference>
<dbReference type="GO" id="GO:0000791">
    <property type="term" value="C:euchromatin"/>
    <property type="evidence" value="ECO:0000314"/>
    <property type="project" value="UniProtKB"/>
</dbReference>
<dbReference type="GO" id="GO:0000792">
    <property type="term" value="C:heterochromatin"/>
    <property type="evidence" value="ECO:0007669"/>
    <property type="project" value="Ensembl"/>
</dbReference>
<dbReference type="GO" id="GO:0016363">
    <property type="term" value="C:nuclear matrix"/>
    <property type="evidence" value="ECO:0000314"/>
    <property type="project" value="UniProtKB"/>
</dbReference>
<dbReference type="GO" id="GO:0005654">
    <property type="term" value="C:nucleoplasm"/>
    <property type="evidence" value="ECO:0000314"/>
    <property type="project" value="HPA"/>
</dbReference>
<dbReference type="GO" id="GO:0005634">
    <property type="term" value="C:nucleus"/>
    <property type="evidence" value="ECO:0000314"/>
    <property type="project" value="UniProtKB"/>
</dbReference>
<dbReference type="GO" id="GO:0001741">
    <property type="term" value="C:XY body"/>
    <property type="evidence" value="ECO:0007669"/>
    <property type="project" value="Ensembl"/>
</dbReference>
<dbReference type="GO" id="GO:0003682">
    <property type="term" value="F:chromatin binding"/>
    <property type="evidence" value="ECO:0007669"/>
    <property type="project" value="Ensembl"/>
</dbReference>
<dbReference type="GO" id="GO:0003886">
    <property type="term" value="F:DNA (cytosine-5-)-methyltransferase activity"/>
    <property type="evidence" value="ECO:0000314"/>
    <property type="project" value="UniProtKB"/>
</dbReference>
<dbReference type="GO" id="GO:0003677">
    <property type="term" value="F:DNA binding"/>
    <property type="evidence" value="ECO:0000269"/>
    <property type="project" value="DisProt"/>
</dbReference>
<dbReference type="GO" id="GO:0042802">
    <property type="term" value="F:identical protein binding"/>
    <property type="evidence" value="ECO:0000353"/>
    <property type="project" value="IntAct"/>
</dbReference>
<dbReference type="GO" id="GO:0106222">
    <property type="term" value="F:lncRNA binding"/>
    <property type="evidence" value="ECO:0000314"/>
    <property type="project" value="FlyBase"/>
</dbReference>
<dbReference type="GO" id="GO:0106363">
    <property type="term" value="F:protein-cysteine methyltransferase activity"/>
    <property type="evidence" value="ECO:0000250"/>
    <property type="project" value="UniProtKB"/>
</dbReference>
<dbReference type="GO" id="GO:0000978">
    <property type="term" value="F:RNA polymerase II cis-regulatory region sequence-specific DNA binding"/>
    <property type="evidence" value="ECO:0000314"/>
    <property type="project" value="BHF-UCL"/>
</dbReference>
<dbReference type="GO" id="GO:0061629">
    <property type="term" value="F:RNA polymerase II-specific DNA-binding transcription factor binding"/>
    <property type="evidence" value="ECO:0000353"/>
    <property type="project" value="BHF-UCL"/>
</dbReference>
<dbReference type="GO" id="GO:0003714">
    <property type="term" value="F:transcription corepressor activity"/>
    <property type="evidence" value="ECO:0000304"/>
    <property type="project" value="BHF-UCL"/>
</dbReference>
<dbReference type="GO" id="GO:0045322">
    <property type="term" value="F:unmethylated CpG binding"/>
    <property type="evidence" value="ECO:0000269"/>
    <property type="project" value="DisProt"/>
</dbReference>
<dbReference type="GO" id="GO:0008270">
    <property type="term" value="F:zinc ion binding"/>
    <property type="evidence" value="ECO:0007669"/>
    <property type="project" value="UniProtKB-KW"/>
</dbReference>
<dbReference type="GO" id="GO:0141068">
    <property type="term" value="P:autosome genomic imprinting"/>
    <property type="evidence" value="ECO:0007669"/>
    <property type="project" value="Ensembl"/>
</dbReference>
<dbReference type="GO" id="GO:0071230">
    <property type="term" value="P:cellular response to amino acid stimulus"/>
    <property type="evidence" value="ECO:0007669"/>
    <property type="project" value="Ensembl"/>
</dbReference>
<dbReference type="GO" id="GO:1903926">
    <property type="term" value="P:cellular response to bisphenol A"/>
    <property type="evidence" value="ECO:0007669"/>
    <property type="project" value="Ensembl"/>
</dbReference>
<dbReference type="GO" id="GO:0071361">
    <property type="term" value="P:cellular response to ethanol"/>
    <property type="evidence" value="ECO:0007669"/>
    <property type="project" value="Ensembl"/>
</dbReference>
<dbReference type="GO" id="GO:0071456">
    <property type="term" value="P:cellular response to hypoxia"/>
    <property type="evidence" value="ECO:0007669"/>
    <property type="project" value="Ensembl"/>
</dbReference>
<dbReference type="GO" id="GO:0006346">
    <property type="term" value="P:DNA methylation-dependent constitutive heterochromatin formation"/>
    <property type="evidence" value="ECO:0000315"/>
    <property type="project" value="UniProtKB"/>
</dbReference>
<dbReference type="GO" id="GO:0097284">
    <property type="term" value="P:hepatocyte apoptotic process"/>
    <property type="evidence" value="ECO:0007669"/>
    <property type="project" value="Ensembl"/>
</dbReference>
<dbReference type="GO" id="GO:0032259">
    <property type="term" value="P:methylation"/>
    <property type="evidence" value="ECO:0007669"/>
    <property type="project" value="UniProtKB-KW"/>
</dbReference>
<dbReference type="GO" id="GO:0045892">
    <property type="term" value="P:negative regulation of DNA-templated transcription"/>
    <property type="evidence" value="ECO:0000318"/>
    <property type="project" value="GO_Central"/>
</dbReference>
<dbReference type="GO" id="GO:0044027">
    <property type="term" value="P:negative regulation of gene expression via chromosomal CpG island methylation"/>
    <property type="evidence" value="ECO:0000314"/>
    <property type="project" value="UniProtKB"/>
</dbReference>
<dbReference type="GO" id="GO:0000122">
    <property type="term" value="P:negative regulation of transcription by RNA polymerase II"/>
    <property type="evidence" value="ECO:0000314"/>
    <property type="project" value="ARUK-UCL"/>
</dbReference>
<dbReference type="GO" id="GO:0030182">
    <property type="term" value="P:neuron differentiation"/>
    <property type="evidence" value="ECO:0007669"/>
    <property type="project" value="Ensembl"/>
</dbReference>
<dbReference type="GO" id="GO:1900039">
    <property type="term" value="P:positive regulation of cellular response to hypoxia"/>
    <property type="evidence" value="ECO:0007669"/>
    <property type="project" value="Ensembl"/>
</dbReference>
<dbReference type="GO" id="GO:0009791">
    <property type="term" value="P:post-embryonic development"/>
    <property type="evidence" value="ECO:0007669"/>
    <property type="project" value="Ensembl"/>
</dbReference>
<dbReference type="GO" id="GO:0031048">
    <property type="term" value="P:regulatory ncRNA-mediated heterochromatin formation"/>
    <property type="evidence" value="ECO:0000316"/>
    <property type="project" value="FlyBase"/>
</dbReference>
<dbReference type="GO" id="GO:0042220">
    <property type="term" value="P:response to cocaine"/>
    <property type="evidence" value="ECO:0007669"/>
    <property type="project" value="Ensembl"/>
</dbReference>
<dbReference type="GO" id="GO:0032355">
    <property type="term" value="P:response to estradiol"/>
    <property type="evidence" value="ECO:0007669"/>
    <property type="project" value="Ensembl"/>
</dbReference>
<dbReference type="GO" id="GO:0010212">
    <property type="term" value="P:response to ionizing radiation"/>
    <property type="evidence" value="ECO:0007669"/>
    <property type="project" value="Ensembl"/>
</dbReference>
<dbReference type="GO" id="GO:0010288">
    <property type="term" value="P:response to lead ion"/>
    <property type="evidence" value="ECO:0007669"/>
    <property type="project" value="Ensembl"/>
</dbReference>
<dbReference type="GO" id="GO:0009636">
    <property type="term" value="P:response to toxic substance"/>
    <property type="evidence" value="ECO:0007669"/>
    <property type="project" value="Ensembl"/>
</dbReference>
<dbReference type="GO" id="GO:0033189">
    <property type="term" value="P:response to vitamin A"/>
    <property type="evidence" value="ECO:0007669"/>
    <property type="project" value="Ensembl"/>
</dbReference>
<dbReference type="GO" id="GO:0009410">
    <property type="term" value="P:response to xenobiotic stimulus"/>
    <property type="evidence" value="ECO:0007669"/>
    <property type="project" value="Ensembl"/>
</dbReference>
<dbReference type="GO" id="GO:0007283">
    <property type="term" value="P:spermatogenesis"/>
    <property type="evidence" value="ECO:0007669"/>
    <property type="project" value="Ensembl"/>
</dbReference>
<dbReference type="GO" id="GO:0141196">
    <property type="term" value="P:transposable element silencing by piRNA-mediated DNA methylation"/>
    <property type="evidence" value="ECO:0007669"/>
    <property type="project" value="Ensembl"/>
</dbReference>
<dbReference type="CDD" id="cd11729">
    <property type="entry name" value="ADDz_Dnmt3a"/>
    <property type="match status" value="1"/>
</dbReference>
<dbReference type="CDD" id="cd20154">
    <property type="entry name" value="PWWP_DNMT3A"/>
    <property type="match status" value="1"/>
</dbReference>
<dbReference type="FunFam" id="3.40.50.150:FF:000008">
    <property type="entry name" value="DNA (Cytosine-5)-methyltransferase 3A isoform X1"/>
    <property type="match status" value="1"/>
</dbReference>
<dbReference type="FunFam" id="2.30.30.140:FF:000006">
    <property type="entry name" value="DNA (Cytosine-5)-methyltransferase 3B isoform 3"/>
    <property type="match status" value="1"/>
</dbReference>
<dbReference type="FunFam" id="1.10.720.50:FF:000002">
    <property type="entry name" value="DNA methyltransferase 3 alpha"/>
    <property type="match status" value="1"/>
</dbReference>
<dbReference type="FunFam" id="3.40.50.150:FF:000011">
    <property type="entry name" value="DNA methyltransferase 3 alpha"/>
    <property type="match status" value="1"/>
</dbReference>
<dbReference type="Gene3D" id="2.30.30.140">
    <property type="match status" value="1"/>
</dbReference>
<dbReference type="Gene3D" id="1.10.720.50">
    <property type="entry name" value="PWWP, helical domain"/>
    <property type="match status" value="1"/>
</dbReference>
<dbReference type="Gene3D" id="3.40.50.150">
    <property type="entry name" value="Vaccinia Virus protein VP39"/>
    <property type="match status" value="2"/>
</dbReference>
<dbReference type="IDEAL" id="IID00336"/>
<dbReference type="InterPro" id="IPR025766">
    <property type="entry name" value="ADD"/>
</dbReference>
<dbReference type="InterPro" id="IPR044108">
    <property type="entry name" value="ADD_DNMT3A"/>
</dbReference>
<dbReference type="InterPro" id="IPR018117">
    <property type="entry name" value="C5_DNA_meth_AS"/>
</dbReference>
<dbReference type="InterPro" id="IPR001525">
    <property type="entry name" value="C5_MeTfrase"/>
</dbReference>
<dbReference type="InterPro" id="IPR054724">
    <property type="entry name" value="DNM3A_N"/>
</dbReference>
<dbReference type="InterPro" id="IPR040552">
    <property type="entry name" value="DNMT3_ADD_GATA1-like"/>
</dbReference>
<dbReference type="InterPro" id="IPR049554">
    <property type="entry name" value="DNMT3_ADD_PHD"/>
</dbReference>
<dbReference type="InterPro" id="IPR000313">
    <property type="entry name" value="PWWP_dom"/>
</dbReference>
<dbReference type="InterPro" id="IPR029063">
    <property type="entry name" value="SAM-dependent_MTases_sf"/>
</dbReference>
<dbReference type="PANTHER" id="PTHR23068:SF10">
    <property type="entry name" value="DNA (CYTOSINE-5)-METHYLTRANSFERASE 3A"/>
    <property type="match status" value="1"/>
</dbReference>
<dbReference type="PANTHER" id="PTHR23068">
    <property type="entry name" value="DNA CYTOSINE-5- -METHYLTRANSFERASE 3-RELATED"/>
    <property type="match status" value="1"/>
</dbReference>
<dbReference type="Pfam" id="PF17980">
    <property type="entry name" value="ADD_DNMT3"/>
    <property type="match status" value="1"/>
</dbReference>
<dbReference type="Pfam" id="PF00145">
    <property type="entry name" value="DNA_methylase"/>
    <property type="match status" value="1"/>
</dbReference>
<dbReference type="Pfam" id="PF22855">
    <property type="entry name" value="DNM3A_N"/>
    <property type="match status" value="1"/>
</dbReference>
<dbReference type="Pfam" id="PF21255">
    <property type="entry name" value="DNMT3_ADD_GATA1-like"/>
    <property type="match status" value="1"/>
</dbReference>
<dbReference type="Pfam" id="PF00855">
    <property type="entry name" value="PWWP"/>
    <property type="match status" value="1"/>
</dbReference>
<dbReference type="SMART" id="SM00293">
    <property type="entry name" value="PWWP"/>
    <property type="match status" value="1"/>
</dbReference>
<dbReference type="SUPFAM" id="SSF53335">
    <property type="entry name" value="S-adenosyl-L-methionine-dependent methyltransferases"/>
    <property type="match status" value="1"/>
</dbReference>
<dbReference type="SUPFAM" id="SSF63748">
    <property type="entry name" value="Tudor/PWWP/MBT"/>
    <property type="match status" value="1"/>
</dbReference>
<dbReference type="PROSITE" id="PS51533">
    <property type="entry name" value="ADD"/>
    <property type="match status" value="1"/>
</dbReference>
<dbReference type="PROSITE" id="PS00094">
    <property type="entry name" value="C5_MTASE_1"/>
    <property type="match status" value="1"/>
</dbReference>
<dbReference type="PROSITE" id="PS50812">
    <property type="entry name" value="PWWP"/>
    <property type="match status" value="1"/>
</dbReference>
<dbReference type="PROSITE" id="PS51679">
    <property type="entry name" value="SAM_MT_C5"/>
    <property type="match status" value="1"/>
</dbReference>
<evidence type="ECO:0000250" key="1">
    <source>
        <dbReference type="UniProtKB" id="O88508"/>
    </source>
</evidence>
<evidence type="ECO:0000250" key="2">
    <source>
        <dbReference type="UniProtKB" id="Q1LZ53"/>
    </source>
</evidence>
<evidence type="ECO:0000255" key="3">
    <source>
        <dbReference type="PROSITE-ProRule" id="PRU00162"/>
    </source>
</evidence>
<evidence type="ECO:0000255" key="4">
    <source>
        <dbReference type="PROSITE-ProRule" id="PRU00865"/>
    </source>
</evidence>
<evidence type="ECO:0000255" key="5">
    <source>
        <dbReference type="PROSITE-ProRule" id="PRU01016"/>
    </source>
</evidence>
<evidence type="ECO:0000255" key="6">
    <source>
        <dbReference type="PROSITE-ProRule" id="PRU10018"/>
    </source>
</evidence>
<evidence type="ECO:0000256" key="7">
    <source>
        <dbReference type="SAM" id="MobiDB-lite"/>
    </source>
</evidence>
<evidence type="ECO:0000269" key="8">
    <source>
    </source>
</evidence>
<evidence type="ECO:0000269" key="9">
    <source>
    </source>
</evidence>
<evidence type="ECO:0000269" key="10">
    <source>
    </source>
</evidence>
<evidence type="ECO:0000269" key="11">
    <source>
    </source>
</evidence>
<evidence type="ECO:0000269" key="12">
    <source>
    </source>
</evidence>
<evidence type="ECO:0000269" key="13">
    <source>
    </source>
</evidence>
<evidence type="ECO:0000269" key="14">
    <source>
    </source>
</evidence>
<evidence type="ECO:0000269" key="15">
    <source>
    </source>
</evidence>
<evidence type="ECO:0000269" key="16">
    <source>
    </source>
</evidence>
<evidence type="ECO:0000269" key="17">
    <source>
    </source>
</evidence>
<evidence type="ECO:0000269" key="18">
    <source>
    </source>
</evidence>
<evidence type="ECO:0000269" key="19">
    <source>
    </source>
</evidence>
<evidence type="ECO:0000269" key="20">
    <source>
    </source>
</evidence>
<evidence type="ECO:0000269" key="21">
    <source>
    </source>
</evidence>
<evidence type="ECO:0000269" key="22">
    <source>
    </source>
</evidence>
<evidence type="ECO:0000269" key="23">
    <source>
    </source>
</evidence>
<evidence type="ECO:0000269" key="24">
    <source>
    </source>
</evidence>
<evidence type="ECO:0000269" key="25">
    <source>
    </source>
</evidence>
<evidence type="ECO:0000269" key="26">
    <source>
    </source>
</evidence>
<evidence type="ECO:0000303" key="27">
    <source>
    </source>
</evidence>
<evidence type="ECO:0000303" key="28">
    <source>
    </source>
</evidence>
<evidence type="ECO:0000305" key="29"/>
<evidence type="ECO:0007744" key="30">
    <source>
        <dbReference type="PDB" id="2QRV"/>
    </source>
</evidence>
<evidence type="ECO:0007744" key="31">
    <source>
    </source>
</evidence>
<evidence type="ECO:0007744" key="32">
    <source>
    </source>
</evidence>
<evidence type="ECO:0007744" key="33">
    <source>
    </source>
</evidence>
<evidence type="ECO:0007744" key="34">
    <source>
    </source>
</evidence>
<evidence type="ECO:0007744" key="35">
    <source>
    </source>
</evidence>
<evidence type="ECO:0007744" key="36">
    <source>
    </source>
</evidence>
<evidence type="ECO:0007829" key="37">
    <source>
        <dbReference type="PDB" id="3LLR"/>
    </source>
</evidence>
<evidence type="ECO:0007829" key="38">
    <source>
        <dbReference type="PDB" id="4QBQ"/>
    </source>
</evidence>
<evidence type="ECO:0007829" key="39">
    <source>
        <dbReference type="PDB" id="4QBS"/>
    </source>
</evidence>
<evidence type="ECO:0007829" key="40">
    <source>
        <dbReference type="PDB" id="4U7T"/>
    </source>
</evidence>
<evidence type="ECO:0007829" key="41">
    <source>
        <dbReference type="PDB" id="6W8B"/>
    </source>
</evidence>
<evidence type="ECO:0007829" key="42">
    <source>
        <dbReference type="PDB" id="6W8D"/>
    </source>
</evidence>
<evidence type="ECO:0007829" key="43">
    <source>
        <dbReference type="PDB" id="8BA5"/>
    </source>
</evidence>
<evidence type="ECO:0007829" key="44">
    <source>
        <dbReference type="PDB" id="8TDR"/>
    </source>
</evidence>
<evidence type="ECO:0007829" key="45">
    <source>
        <dbReference type="PDB" id="8TE4"/>
    </source>
</evidence>
<evidence type="ECO:0007829" key="46">
    <source>
        <dbReference type="PDB" id="8U5H"/>
    </source>
</evidence>
<keyword id="KW-0002">3D-structure</keyword>
<keyword id="KW-0877">Alternative promoter usage</keyword>
<keyword id="KW-0025">Alternative splicing</keyword>
<keyword id="KW-0156">Chromatin regulator</keyword>
<keyword id="KW-0158">Chromosome</keyword>
<keyword id="KW-0963">Cytoplasm</keyword>
<keyword id="KW-0225">Disease variant</keyword>
<keyword id="KW-0238">DNA-binding</keyword>
<keyword id="KW-0242">Dwarfism</keyword>
<keyword id="KW-0991">Intellectual disability</keyword>
<keyword id="KW-1017">Isopeptide bond</keyword>
<keyword id="KW-0479">Metal-binding</keyword>
<keyword id="KW-0488">Methylation</keyword>
<keyword id="KW-0489">Methyltransferase</keyword>
<keyword id="KW-0539">Nucleus</keyword>
<keyword id="KW-0597">Phosphoprotein</keyword>
<keyword id="KW-1267">Proteomics identification</keyword>
<keyword id="KW-1185">Reference proteome</keyword>
<keyword id="KW-0678">Repressor</keyword>
<keyword id="KW-0949">S-adenosyl-L-methionine</keyword>
<keyword id="KW-0808">Transferase</keyword>
<keyword id="KW-0832">Ubl conjugation</keyword>
<keyword id="KW-0862">Zinc</keyword>
<keyword id="KW-0863">Zinc-finger</keyword>